<reference key="1">
    <citation type="journal article" date="2001" name="Proc. Natl. Acad. Sci. U.S.A.">
        <title>Regulation of melastatin, a TRP-related protein, through interaction with a cytoplasmic isoform.</title>
        <authorList>
            <person name="Xu X.-Z.S."/>
            <person name="Moebius F."/>
            <person name="Gill D.L."/>
            <person name="Montell C."/>
        </authorList>
    </citation>
    <scope>NUCLEOTIDE SEQUENCE [MRNA] (ISOFORM 2)</scope>
    <scope>FUNCTION</scope>
    <scope>SUBCELLULAR LOCATION</scope>
    <scope>TISSUE SPECIFICITY</scope>
</reference>
<reference key="2">
    <citation type="journal article" date="2002" name="Cell">
        <title>TRPM4 is a Ca2+-activated nonselective cation channel mediating cell membrane depolarization.</title>
        <authorList>
            <person name="Launay P."/>
            <person name="Fleig A."/>
            <person name="Perraud A.-L."/>
            <person name="Scharenberg A.M."/>
            <person name="Penner R."/>
            <person name="Kinet J.-P."/>
        </authorList>
    </citation>
    <scope>NUCLEOTIDE SEQUENCE [MRNA] (ISOFORM 1)</scope>
    <scope>FUNCTION</scope>
    <scope>TRANSPORTER ACTIVITY</scope>
    <scope>SUBCELLULAR LOCATION</scope>
    <scope>SUBUNIT</scope>
    <scope>TISSUE SPECIFICITY</scope>
</reference>
<reference key="3">
    <citation type="journal article" date="2003" name="Curr. Biol.">
        <title>TRPM5 is a voltage-modulated and Ca(2+)-activated monovalent selective cation channel.</title>
        <authorList>
            <person name="Hofmann T."/>
            <person name="Chubanov V."/>
            <person name="Gudermann T."/>
            <person name="Montell C."/>
        </authorList>
    </citation>
    <scope>NUCLEOTIDE SEQUENCE [MRNA] (ISOFORMS 1; 2 AND 3)</scope>
</reference>
<reference key="4">
    <citation type="journal article" date="2003" name="J. Biol. Chem.">
        <title>Voltage dependence of the Ca2+-activated cation channel TRPM4.</title>
        <authorList>
            <person name="Nilius B."/>
            <person name="Prenen J."/>
            <person name="Droogmans G."/>
            <person name="Voets T."/>
            <person name="Vennekens R."/>
            <person name="Freichel M."/>
            <person name="Wissenbach U."/>
            <person name="Flockerzi V."/>
        </authorList>
    </citation>
    <scope>NUCLEOTIDE SEQUENCE [MRNA] (ISOFORM 1)</scope>
    <scope>FUNCTION</scope>
    <scope>TISSUE SPECIFICITY</scope>
    <scope>ACTIVITY REGULATION</scope>
    <source>
        <tissue>Prostate</tissue>
    </source>
</reference>
<reference key="5">
    <citation type="journal article" date="2003" name="J. Biol. Chem.">
        <authorList>
            <person name="Nilius B."/>
            <person name="Prenen J."/>
            <person name="Droogmans G."/>
            <person name="Voets T."/>
            <person name="Vennekens R."/>
            <person name="Freichel M."/>
            <person name="Wissenbach U."/>
            <person name="Flockerzi V."/>
        </authorList>
    </citation>
    <scope>ERRATUM OF PUBMED:12799367</scope>
</reference>
<reference key="6">
    <citation type="journal article" date="2004" name="Nat. Genet.">
        <title>Complete sequencing and characterization of 21,243 full-length human cDNAs.</title>
        <authorList>
            <person name="Ota T."/>
            <person name="Suzuki Y."/>
            <person name="Nishikawa T."/>
            <person name="Otsuki T."/>
            <person name="Sugiyama T."/>
            <person name="Irie R."/>
            <person name="Wakamatsu A."/>
            <person name="Hayashi K."/>
            <person name="Sato H."/>
            <person name="Nagai K."/>
            <person name="Kimura K."/>
            <person name="Makita H."/>
            <person name="Sekine M."/>
            <person name="Obayashi M."/>
            <person name="Nishi T."/>
            <person name="Shibahara T."/>
            <person name="Tanaka T."/>
            <person name="Ishii S."/>
            <person name="Yamamoto J."/>
            <person name="Saito K."/>
            <person name="Kawai Y."/>
            <person name="Isono Y."/>
            <person name="Nakamura Y."/>
            <person name="Nagahari K."/>
            <person name="Murakami K."/>
            <person name="Yasuda T."/>
            <person name="Iwayanagi T."/>
            <person name="Wagatsuma M."/>
            <person name="Shiratori A."/>
            <person name="Sudo H."/>
            <person name="Hosoiri T."/>
            <person name="Kaku Y."/>
            <person name="Kodaira H."/>
            <person name="Kondo H."/>
            <person name="Sugawara M."/>
            <person name="Takahashi M."/>
            <person name="Kanda K."/>
            <person name="Yokoi T."/>
            <person name="Furuya T."/>
            <person name="Kikkawa E."/>
            <person name="Omura Y."/>
            <person name="Abe K."/>
            <person name="Kamihara K."/>
            <person name="Katsuta N."/>
            <person name="Sato K."/>
            <person name="Tanikawa M."/>
            <person name="Yamazaki M."/>
            <person name="Ninomiya K."/>
            <person name="Ishibashi T."/>
            <person name="Yamashita H."/>
            <person name="Murakawa K."/>
            <person name="Fujimori K."/>
            <person name="Tanai H."/>
            <person name="Kimata M."/>
            <person name="Watanabe M."/>
            <person name="Hiraoka S."/>
            <person name="Chiba Y."/>
            <person name="Ishida S."/>
            <person name="Ono Y."/>
            <person name="Takiguchi S."/>
            <person name="Watanabe S."/>
            <person name="Yosida M."/>
            <person name="Hotuta T."/>
            <person name="Kusano J."/>
            <person name="Kanehori K."/>
            <person name="Takahashi-Fujii A."/>
            <person name="Hara H."/>
            <person name="Tanase T.-O."/>
            <person name="Nomura Y."/>
            <person name="Togiya S."/>
            <person name="Komai F."/>
            <person name="Hara R."/>
            <person name="Takeuchi K."/>
            <person name="Arita M."/>
            <person name="Imose N."/>
            <person name="Musashino K."/>
            <person name="Yuuki H."/>
            <person name="Oshima A."/>
            <person name="Sasaki N."/>
            <person name="Aotsuka S."/>
            <person name="Yoshikawa Y."/>
            <person name="Matsunawa H."/>
            <person name="Ichihara T."/>
            <person name="Shiohata N."/>
            <person name="Sano S."/>
            <person name="Moriya S."/>
            <person name="Momiyama H."/>
            <person name="Satoh N."/>
            <person name="Takami S."/>
            <person name="Terashima Y."/>
            <person name="Suzuki O."/>
            <person name="Nakagawa S."/>
            <person name="Senoh A."/>
            <person name="Mizoguchi H."/>
            <person name="Goto Y."/>
            <person name="Shimizu F."/>
            <person name="Wakebe H."/>
            <person name="Hishigaki H."/>
            <person name="Watanabe T."/>
            <person name="Sugiyama A."/>
            <person name="Takemoto M."/>
            <person name="Kawakami B."/>
            <person name="Yamazaki M."/>
            <person name="Watanabe K."/>
            <person name="Kumagai A."/>
            <person name="Itakura S."/>
            <person name="Fukuzumi Y."/>
            <person name="Fujimori Y."/>
            <person name="Komiyama M."/>
            <person name="Tashiro H."/>
            <person name="Tanigami A."/>
            <person name="Fujiwara T."/>
            <person name="Ono T."/>
            <person name="Yamada K."/>
            <person name="Fujii Y."/>
            <person name="Ozaki K."/>
            <person name="Hirao M."/>
            <person name="Ohmori Y."/>
            <person name="Kawabata A."/>
            <person name="Hikiji T."/>
            <person name="Kobatake N."/>
            <person name="Inagaki H."/>
            <person name="Ikema Y."/>
            <person name="Okamoto S."/>
            <person name="Okitani R."/>
            <person name="Kawakami T."/>
            <person name="Noguchi S."/>
            <person name="Itoh T."/>
            <person name="Shigeta K."/>
            <person name="Senba T."/>
            <person name="Matsumura K."/>
            <person name="Nakajima Y."/>
            <person name="Mizuno T."/>
            <person name="Morinaga M."/>
            <person name="Sasaki M."/>
            <person name="Togashi T."/>
            <person name="Oyama M."/>
            <person name="Hata H."/>
            <person name="Watanabe M."/>
            <person name="Komatsu T."/>
            <person name="Mizushima-Sugano J."/>
            <person name="Satoh T."/>
            <person name="Shirai Y."/>
            <person name="Takahashi Y."/>
            <person name="Nakagawa K."/>
            <person name="Okumura K."/>
            <person name="Nagase T."/>
            <person name="Nomura N."/>
            <person name="Kikuchi H."/>
            <person name="Masuho Y."/>
            <person name="Yamashita R."/>
            <person name="Nakai K."/>
            <person name="Yada T."/>
            <person name="Nakamura Y."/>
            <person name="Ohara O."/>
            <person name="Isogai T."/>
            <person name="Sugano S."/>
        </authorList>
    </citation>
    <scope>NUCLEOTIDE SEQUENCE [LARGE SCALE MRNA] (ISOFORM 1)</scope>
    <source>
        <tissue>Trachea</tissue>
    </source>
</reference>
<reference key="7">
    <citation type="journal article" date="2004" name="Genome Res.">
        <title>The status, quality, and expansion of the NIH full-length cDNA project: the Mammalian Gene Collection (MGC).</title>
        <authorList>
            <consortium name="The MGC Project Team"/>
        </authorList>
    </citation>
    <scope>NUCLEOTIDE SEQUENCE [LARGE SCALE MRNA] (ISOFORM 1)</scope>
    <source>
        <tissue>Brain</tissue>
    </source>
</reference>
<reference key="8">
    <citation type="journal article" date="2004" name="Circ. Res.">
        <title>Critical role for transient receptor potential channel TRPM4 in myogenic constriction of cerebral arteries.</title>
        <authorList>
            <person name="Earley S."/>
            <person name="Waldron B.J."/>
            <person name="Brayden J.E."/>
        </authorList>
    </citation>
    <scope>FUNCTION</scope>
    <scope>TISSUE SPECIFICITY</scope>
</reference>
<reference key="9">
    <citation type="journal article" date="2004" name="J. Physiol. (Lond.)">
        <title>Functional characterization of a Ca(2+)-activated non-selective cation channel in human atrial cardiomyocytes.</title>
        <authorList>
            <person name="Guinamard R."/>
            <person name="Chatelier A."/>
            <person name="Demion M."/>
            <person name="Potreau D."/>
            <person name="Patri S."/>
            <person name="Rahmati M."/>
            <person name="Bois P."/>
        </authorList>
    </citation>
    <scope>FUNCTION</scope>
</reference>
<reference key="10">
    <citation type="journal article" date="2004" name="J. Physiol. (Lond.)">
        <title>Decavanadate modulates gating of TRPM4 cation channels.</title>
        <authorList>
            <person name="Nilius B."/>
            <person name="Prenen J."/>
            <person name="Janssens A."/>
            <person name="Voets T."/>
            <person name="Droogmans G."/>
        </authorList>
    </citation>
    <scope>ACTIVITY REGULATION</scope>
    <scope>FUNCTION</scope>
    <scope>SUBCELLULAR LOCATION</scope>
</reference>
<reference key="11">
    <citation type="journal article" date="2004" name="Pflugers Arch.">
        <title>Intracellular nucleotides and polyamines inhibit the Ca2+-activated cation channel TRPM4b.</title>
        <authorList>
            <person name="Nilius B."/>
            <person name="Prenen J."/>
            <person name="Voets T."/>
            <person name="Droogmans G."/>
        </authorList>
    </citation>
    <scope>ATP-BINDING</scope>
    <scope>ACTIVITY REGULATION</scope>
    <scope>FUNCTION</scope>
</reference>
<reference key="12">
    <citation type="journal article" date="2004" name="Science">
        <title>TRPM4 regulates calcium oscillations after T cell activation.</title>
        <authorList>
            <person name="Launay P."/>
            <person name="Cheng H."/>
            <person name="Srivatsan S."/>
            <person name="Penner R."/>
            <person name="Fleig A."/>
            <person name="Kinet J.-P."/>
        </authorList>
    </citation>
    <scope>FUNCTION</scope>
</reference>
<reference key="13">
    <citation type="journal article" date="2005" name="J. Biol. Chem.">
        <title>Regulation of the Ca2+ sensitivity of the nonselective cation channel TRPM4.</title>
        <authorList>
            <person name="Nilius B."/>
            <person name="Prenen J."/>
            <person name="Tang J."/>
            <person name="Wang C."/>
            <person name="Owsianik G."/>
            <person name="Janssens A."/>
            <person name="Voets T."/>
            <person name="Zhu M.X."/>
        </authorList>
    </citation>
    <scope>FUNCTION</scope>
    <scope>ACTIVITY REGULATION</scope>
    <scope>SUBCELLULAR LOCATION</scope>
    <scope>PHOSPHORYLATION AT SER-1145 AND SER-1152</scope>
    <scope>ATP-BINDING</scope>
    <scope>CALMODULIN-BINDING</scope>
    <scope>MUTAGENESIS OF LEU-275; ILE-278; ASP-279; GLY-324; GLY-325; ARG-327; SER-1145 AND SER-1152</scope>
</reference>
<reference key="14">
    <citation type="journal article" date="2005" name="J. Biol. Chem.">
        <title>The selectivity filter of the cation channel TRPM4.</title>
        <authorList>
            <person name="Nilius B."/>
            <person name="Prenen J."/>
            <person name="Janssens A."/>
            <person name="Owsianik G."/>
            <person name="Wang C."/>
            <person name="Zhu M.X."/>
            <person name="Voets T."/>
        </authorList>
    </citation>
    <scope>FUNCTION</scope>
    <scope>MUTAGENESIS OF GLN-977; GLU-981; 981-GLU--ALA-986; ASP-982 AND ASP-984</scope>
</reference>
<reference key="15">
    <citation type="journal article" date="2005" name="J. Biol. Chem.">
        <title>Phosphatidylinositol 4,5-bisphosphate rescues TRPM4 channels from desensitization.</title>
        <authorList>
            <person name="Zhang Z."/>
            <person name="Okawa H."/>
            <person name="Wang Y."/>
            <person name="Liman E.R."/>
        </authorList>
    </citation>
    <scope>ACTIVITY REGULATION</scope>
    <scope>PIP2-BINDING</scope>
    <scope>FUNCTION</scope>
</reference>
<reference key="16">
    <citation type="journal article" date="2007" name="Cell Calcium">
        <title>TRPM4 controls insulin secretion in pancreatic beta-cells.</title>
        <authorList>
            <person name="Cheng H."/>
            <person name="Beck A."/>
            <person name="Launay P."/>
            <person name="Gross S.A."/>
            <person name="Stokes A.J."/>
            <person name="Kinet J.-P."/>
            <person name="Fleig A."/>
            <person name="Penner R."/>
        </authorList>
    </citation>
    <scope>FUNCTION</scope>
</reference>
<reference key="17">
    <citation type="journal article" date="2006" name="EMBO J.">
        <title>The Ca2+-activated cation channel TRPM4 is regulated by phosphatidylinositol 4,5-biphosphate.</title>
        <authorList>
            <person name="Nilius B."/>
            <person name="Mahieu F."/>
            <person name="Prenen J."/>
            <person name="Janssens A."/>
            <person name="Owsianik G."/>
            <person name="Vennekens R."/>
            <person name="Voets T."/>
        </authorList>
    </citation>
    <scope>FUNCTION</scope>
    <scope>ACTIVITY REGULATION</scope>
    <scope>PIP2-BINDING</scope>
    <scope>MUTAGENESIS OF LYS-1059; ARG-1072 AND 1136-ARG--ARG-1141</scope>
</reference>
<reference key="18">
    <citation type="journal article" date="2006" name="J. Recept. Signal Transduct.">
        <title>Tissue distribution profiles of the human TRPM cation channel family.</title>
        <authorList>
            <person name="Fonfria E."/>
            <person name="Murdock P.R."/>
            <person name="Cusdin F.S."/>
            <person name="Benham C.D."/>
            <person name="Kelsell R.E."/>
            <person name="McNulty S."/>
        </authorList>
    </citation>
    <scope>TISSUE SPECIFICITY</scope>
</reference>
<reference key="19">
    <citation type="journal article" date="2006" name="Mol. Pharmacol.">
        <title>A pyrazole derivative potently inhibits lymphocyte Ca2+ influx and cytokine production by facilitating transient receptor potential melastatin 4 channel activity.</title>
        <authorList>
            <person name="Takezawa R."/>
            <person name="Cheng H."/>
            <person name="Beck A."/>
            <person name="Ishikawa J."/>
            <person name="Launay P."/>
            <person name="Kubota H."/>
            <person name="Kinet J.-P."/>
            <person name="Fleig A."/>
            <person name="Yamada T."/>
            <person name="Penner R."/>
        </authorList>
    </citation>
    <scope>FUNCTION</scope>
    <scope>ACTIVITY REGULATION</scope>
</reference>
<reference key="20">
    <citation type="journal article" date="2010" name="Biochem. Biophys. Res. Commun.">
        <title>Cloning and characterization of rat transient receptor potential-melastatin 4 (TRPM4).</title>
        <authorList>
            <person name="Yoo J.C."/>
            <person name="Yarishkin O.V."/>
            <person name="Hwang E.M."/>
            <person name="Kim E."/>
            <person name="Kim D.G."/>
            <person name="Park N."/>
            <person name="Hong S.G."/>
            <person name="Park J.Y."/>
        </authorList>
    </citation>
    <scope>SUBCELLULAR LOCATION</scope>
</reference>
<reference key="21">
    <citation type="journal article" date="2011" name="J. Cell. Physiol.">
        <title>TRPM4 enhances cell proliferation through up-regulation of the beta-catenin signaling pathway.</title>
        <authorList>
            <person name="Armisen R."/>
            <person name="Marcelain K."/>
            <person name="Simon F."/>
            <person name="Tapia J.C."/>
            <person name="Toro J."/>
            <person name="Quest A.F."/>
            <person name="Stutzin A."/>
        </authorList>
    </citation>
    <scope>FUNCTION</scope>
</reference>
<reference key="22">
    <citation type="journal article" date="2010" name="J. Immunol.">
        <title>Trpm4 differentially regulates Th1 and th2 function by altering calcium signaling and NFAT localization.</title>
        <authorList>
            <person name="Weber K.S."/>
            <person name="Hildner K."/>
            <person name="Murphy K.M."/>
            <person name="Allen P.M."/>
        </authorList>
    </citation>
    <scope>FUNCTION</scope>
    <scope>TISSUE SPECIFICITY</scope>
</reference>
<reference evidence="38" key="23">
    <citation type="journal article" date="2017" name="Nature">
        <title>Electron cryo-microscopy structure of a human TRPM4 channel.</title>
        <authorList>
            <person name="Winkler P.A."/>
            <person name="Huang Y."/>
            <person name="Sun W."/>
            <person name="Du J."/>
            <person name="Lu W."/>
        </authorList>
    </citation>
    <scope>STRUCTURE BY ELECTRON MICROSCOPY (3.80 ANGSTROMS) IN COMPLEX WITH CALCIUM</scope>
    <scope>FUNCTION</scope>
    <scope>ACTIVITY REGULATION</scope>
    <scope>SUBUNIT</scope>
    <scope>SUBCELLULAR LOCATION</scope>
    <scope>TOPOLOGY</scope>
</reference>
<reference evidence="39 40" key="24">
    <citation type="journal article" date="2018" name="Science">
        <title>Structure of the human TRPM4 ion channel in a lipid nanodisc.</title>
        <authorList>
            <person name="Autzen H.E."/>
            <person name="Myasnikov A.G."/>
            <person name="Campbell M.G."/>
            <person name="Asarnow D."/>
            <person name="Julius D."/>
            <person name="Cheng Y."/>
        </authorList>
    </citation>
    <scope>STRUCTURE BY ELECTRON MICROSCOPY (3.10 ANGSTROMS) IN COMPLEX WITH CALCIUM</scope>
    <scope>SUBCELLULAR LOCATION</scope>
    <scope>SUBUNIT</scope>
    <scope>TOPOLOGY</scope>
    <scope>GLYCOSYLATION AT ASN-992</scope>
    <scope>DISULFIDE BONDS</scope>
</reference>
<reference key="25">
    <citation type="journal article" date="2009" name="J. Clin. Invest.">
        <title>Impaired endocytosis of the ion channel TRPM4 is associated with human progressive familial heart block type I.</title>
        <authorList>
            <person name="Kruse M."/>
            <person name="Schulze-Bahr E."/>
            <person name="Corfield V."/>
            <person name="Beckmann A."/>
            <person name="Stallmeyer B."/>
            <person name="Kurtbay G."/>
            <person name="Ohmert I."/>
            <person name="Schulze-Bahr E."/>
            <person name="Brink P."/>
            <person name="Pongs O."/>
        </authorList>
    </citation>
    <scope>VARIANT PFHB1B LYS-7</scope>
    <scope>CHARACTERIZATION OF VARIANT PFHB1B LYS-7</scope>
    <scope>SUMOYLATION</scope>
    <scope>TISSUE SPECIFICITY</scope>
</reference>
<reference key="26">
    <citation type="journal article" date="2010" name="Circ. Cardiovasc. Genet.">
        <title>Gain-of-function mutations in TRPM4 cause autosomal dominant isolated cardiac conduction disease.</title>
        <authorList>
            <person name="Liu H."/>
            <person name="El Zein L."/>
            <person name="Kruse M."/>
            <person name="Guinamard R."/>
            <person name="Beckmann A."/>
            <person name="Bozio A."/>
            <person name="Kurtbay G."/>
            <person name="Megarbane A."/>
            <person name="Ohmert I."/>
            <person name="Blaysat G."/>
            <person name="Villain E."/>
            <person name="Pongs O."/>
            <person name="Bouvagnet P."/>
        </authorList>
    </citation>
    <scope>VARIANTS PFHB1B TRP-164; THR-432 AND ASP-844</scope>
</reference>
<reference key="27">
    <citation type="journal article" date="2012" name="Hum. Mutat.">
        <title>Mutational spectrum in the Ca(2+) -activated cation channel gene TRPM4 in patients with cardiac conductance disturbances.</title>
        <authorList>
            <person name="Stallmeyer B."/>
            <person name="Zumhagen S."/>
            <person name="Denjoy I."/>
            <person name="Duthoit G."/>
            <person name="Hebert J.L."/>
            <person name="Ferrer X."/>
            <person name="Maugenre S."/>
            <person name="Schmitz W."/>
            <person name="Kirchhefer U."/>
            <person name="Schulze-Bahr E."/>
            <person name="Guicheney P."/>
            <person name="Schulze-Bahr E."/>
        </authorList>
    </citation>
    <scope>VARIANTS PFHB1B HIS-131; ARG-293; THR-432; SER-582; HIS-790; ASP-844; ARG-914 AND SER-970</scope>
    <scope>VARIANTS THR-101; CYS-103; HIS-252; LYS-487 DEL; ALA-561; ARG-854 AND LEU-1204</scope>
</reference>
<reference key="28">
    <citation type="journal article" date="2019" name="J. Invest. Dermatol.">
        <title>Gain-of-Function Mutations in TRPM4 Activation Gate Cause Progressive Symmetric Erythrokeratodermia.</title>
        <authorList>
            <person name="Wang H."/>
            <person name="Xu Z."/>
            <person name="Lee B.H."/>
            <person name="Vu S."/>
            <person name="Hu L."/>
            <person name="Lee M."/>
            <person name="Bu D."/>
            <person name="Cao X."/>
            <person name="Hwang S."/>
            <person name="Yang Y."/>
            <person name="Zheng J."/>
            <person name="Lin Z."/>
        </authorList>
    </citation>
    <scope>FUNCTION</scope>
    <scope>INVOLVEMENT IN EKVP6</scope>
    <scope>TISSUE SPECIFICITY</scope>
    <scope>VARIANTS EKVP6 MET-1033 AND THR-1040</scope>
    <scope>CHARACTERIZATION OF VARIANTS EKVP6 MET-1033 AND THR-1040</scope>
</reference>
<reference key="29">
    <citation type="journal article" date="2024" name="Nature">
        <title>Physiological temperature drives TRPM4 ligand recognition and gating.</title>
        <authorList>
            <person name="Hu J."/>
            <person name="Park S.J."/>
            <person name="Walter T."/>
            <person name="Orozco I.J."/>
            <person name="O'Dea G."/>
            <person name="Ye X."/>
            <person name="Du J."/>
            <person name="Lue W."/>
        </authorList>
    </citation>
    <scope>STRUCTURE BY ELECTRON MICROSCOPY (3.10 ANGSTROMS) IN COMPLEX WITH CALCIUM; ATP AND DECAVANADATE</scope>
    <scope>DISULFIDE BOND</scope>
    <scope>FUNCTION</scope>
    <scope>ACTIVITY REGULATION</scope>
    <scope>MUTAGENESIS OF GLU-396; ARG-597; LYS-613; ARG-664; LYS-925 AND LYS-1049</scope>
</reference>
<evidence type="ECO:0000250" key="1">
    <source>
        <dbReference type="UniProtKB" id="Q7TN37"/>
    </source>
</evidence>
<evidence type="ECO:0000255" key="2"/>
<evidence type="ECO:0000269" key="3">
    <source>
    </source>
</evidence>
<evidence type="ECO:0000269" key="4">
    <source>
    </source>
</evidence>
<evidence type="ECO:0000269" key="5">
    <source>
    </source>
</evidence>
<evidence type="ECO:0000269" key="6">
    <source>
    </source>
</evidence>
<evidence type="ECO:0000269" key="7">
    <source>
    </source>
</evidence>
<evidence type="ECO:0000269" key="8">
    <source>
    </source>
</evidence>
<evidence type="ECO:0000269" key="9">
    <source>
    </source>
</evidence>
<evidence type="ECO:0000269" key="10">
    <source>
    </source>
</evidence>
<evidence type="ECO:0000269" key="11">
    <source>
    </source>
</evidence>
<evidence type="ECO:0000269" key="12">
    <source>
    </source>
</evidence>
<evidence type="ECO:0000269" key="13">
    <source>
    </source>
</evidence>
<evidence type="ECO:0000269" key="14">
    <source>
    </source>
</evidence>
<evidence type="ECO:0000269" key="15">
    <source>
    </source>
</evidence>
<evidence type="ECO:0000269" key="16">
    <source>
    </source>
</evidence>
<evidence type="ECO:0000269" key="17">
    <source>
    </source>
</evidence>
<evidence type="ECO:0000269" key="18">
    <source>
    </source>
</evidence>
<evidence type="ECO:0000269" key="19">
    <source>
    </source>
</evidence>
<evidence type="ECO:0000269" key="20">
    <source>
    </source>
</evidence>
<evidence type="ECO:0000269" key="21">
    <source>
    </source>
</evidence>
<evidence type="ECO:0000269" key="22">
    <source>
    </source>
</evidence>
<evidence type="ECO:0000269" key="23">
    <source>
    </source>
</evidence>
<evidence type="ECO:0000269" key="24">
    <source>
    </source>
</evidence>
<evidence type="ECO:0000269" key="25">
    <source>
    </source>
</evidence>
<evidence type="ECO:0000269" key="26">
    <source>
    </source>
</evidence>
<evidence type="ECO:0000269" key="27">
    <source>
    </source>
</evidence>
<evidence type="ECO:0000269" key="28">
    <source>
    </source>
</evidence>
<evidence type="ECO:0000303" key="29">
    <source>
    </source>
</evidence>
<evidence type="ECO:0000303" key="30">
    <source>
    </source>
</evidence>
<evidence type="ECO:0000303" key="31">
    <source>
    </source>
</evidence>
<evidence type="ECO:0000305" key="32"/>
<evidence type="ECO:0000305" key="33">
    <source>
    </source>
</evidence>
<evidence type="ECO:0000305" key="34">
    <source>
    </source>
</evidence>
<evidence type="ECO:0000305" key="35">
    <source>
    </source>
</evidence>
<evidence type="ECO:0000305" key="36">
    <source>
    </source>
</evidence>
<evidence type="ECO:0000312" key="37">
    <source>
        <dbReference type="HGNC" id="HGNC:17993"/>
    </source>
</evidence>
<evidence type="ECO:0007744" key="38">
    <source>
        <dbReference type="PDB" id="5WP6"/>
    </source>
</evidence>
<evidence type="ECO:0007744" key="39">
    <source>
        <dbReference type="PDB" id="6BQR"/>
    </source>
</evidence>
<evidence type="ECO:0007744" key="40">
    <source>
        <dbReference type="PDB" id="6BQV"/>
    </source>
</evidence>
<evidence type="ECO:0007744" key="41">
    <source>
        <dbReference type="PDB" id="9B8W"/>
    </source>
</evidence>
<evidence type="ECO:0007744" key="42">
    <source>
        <dbReference type="PDB" id="9B8Y"/>
    </source>
</evidence>
<evidence type="ECO:0007744" key="43">
    <source>
        <dbReference type="PDB" id="9B90"/>
    </source>
</evidence>
<evidence type="ECO:0007744" key="44">
    <source>
        <dbReference type="PDB" id="9B91"/>
    </source>
</evidence>
<evidence type="ECO:0007744" key="45">
    <source>
        <dbReference type="PDB" id="9B92"/>
    </source>
</evidence>
<evidence type="ECO:0007829" key="46">
    <source>
        <dbReference type="PDB" id="6BQR"/>
    </source>
</evidence>
<evidence type="ECO:0007829" key="47">
    <source>
        <dbReference type="PDB" id="6BQV"/>
    </source>
</evidence>
<evidence type="ECO:0007829" key="48">
    <source>
        <dbReference type="PDB" id="9B8W"/>
    </source>
</evidence>
<evidence type="ECO:0007829" key="49">
    <source>
        <dbReference type="PDB" id="9B8X"/>
    </source>
</evidence>
<evidence type="ECO:0007829" key="50">
    <source>
        <dbReference type="PDB" id="9B8Y"/>
    </source>
</evidence>
<evidence type="ECO:0007829" key="51">
    <source>
        <dbReference type="PDB" id="9B91"/>
    </source>
</evidence>
<evidence type="ECO:0007829" key="52">
    <source>
        <dbReference type="PDB" id="9B93"/>
    </source>
</evidence>
<evidence type="ECO:0007829" key="53">
    <source>
        <dbReference type="PDB" id="9B94"/>
    </source>
</evidence>
<name>TRPM4_HUMAN</name>
<feature type="chain" id="PRO_0000259529" description="Transient receptor potential cation channel subfamily M member 4">
    <location>
        <begin position="1"/>
        <end position="1214"/>
    </location>
</feature>
<feature type="topological domain" description="Cytoplasmic" evidence="25 26">
    <location>
        <begin position="1"/>
        <end position="782"/>
    </location>
</feature>
<feature type="transmembrane region" description="Helical" evidence="25 26">
    <location>
        <begin position="783"/>
        <end position="803"/>
    </location>
</feature>
<feature type="topological domain" description="Extracellular" evidence="25 26">
    <location>
        <begin position="804"/>
        <end position="814"/>
    </location>
</feature>
<feature type="transmembrane region" description="Helical" evidence="25 26">
    <location>
        <begin position="815"/>
        <end position="835"/>
    </location>
</feature>
<feature type="topological domain" description="Cytoplasmic" evidence="25 26">
    <location>
        <begin position="836"/>
        <end position="863"/>
    </location>
</feature>
<feature type="transmembrane region" description="Helical" evidence="25 26">
    <location>
        <begin position="864"/>
        <end position="884"/>
    </location>
</feature>
<feature type="topological domain" description="Extracellular" evidence="25 26">
    <location>
        <begin position="885"/>
        <end position="886"/>
    </location>
</feature>
<feature type="transmembrane region" description="Helical" evidence="25 26">
    <location>
        <begin position="887"/>
        <end position="910"/>
    </location>
</feature>
<feature type="topological domain" description="Cytoplasmic" evidence="25 26">
    <location>
        <begin position="911"/>
        <end position="930"/>
    </location>
</feature>
<feature type="transmembrane region" description="Helical" evidence="25 26">
    <location>
        <begin position="931"/>
        <end position="951"/>
    </location>
</feature>
<feature type="topological domain" description="Extracellular" evidence="25 26">
    <location>
        <begin position="952"/>
        <end position="963"/>
    </location>
</feature>
<feature type="intramembrane region" description="Pore-forming" evidence="25 26">
    <location>
        <begin position="964"/>
        <end position="984"/>
    </location>
</feature>
<feature type="topological domain" description="Extracellular" evidence="25 26">
    <location>
        <begin position="985"/>
        <end position="1019"/>
    </location>
</feature>
<feature type="transmembrane region" description="Helical" evidence="25 26">
    <location>
        <begin position="1020"/>
        <end position="1040"/>
    </location>
</feature>
<feature type="topological domain" description="Cytoplasmic" evidence="25 26">
    <location>
        <begin position="1041"/>
        <end position="1214"/>
    </location>
</feature>
<feature type="region of interest" description="Calmodulin-binding">
    <location>
        <begin position="1076"/>
        <end position="1176"/>
    </location>
</feature>
<feature type="region of interest" description="Mediates modulation by decavanadate and PIP2-binding" evidence="16">
    <location>
        <begin position="1136"/>
        <end position="1141"/>
    </location>
</feature>
<feature type="coiled-coil region" evidence="2">
    <location>
        <begin position="1134"/>
        <end position="1187"/>
    </location>
</feature>
<feature type="short sequence motif" description="Selectivity filter" evidence="35">
    <location>
        <begin position="975"/>
        <end position="977"/>
    </location>
</feature>
<feature type="binding site" evidence="1">
    <location>
        <position position="171"/>
    </location>
    <ligand>
        <name>ATP</name>
        <dbReference type="ChEBI" id="CHEBI:30616"/>
        <label>2</label>
        <note>ligand shared between two neighboring subunits</note>
    </ligand>
</feature>
<feature type="binding site" evidence="28 43 44">
    <location>
        <position position="214"/>
    </location>
    <ligand>
        <name>ATP</name>
        <dbReference type="ChEBI" id="CHEBI:30616"/>
        <label>1</label>
    </ligand>
</feature>
<feature type="binding site" evidence="28 43">
    <location>
        <position position="225"/>
    </location>
    <ligand>
        <name>ATP</name>
        <dbReference type="ChEBI" id="CHEBI:30616"/>
        <label>1</label>
    </ligand>
</feature>
<feature type="binding site" evidence="28 42 44">
    <location>
        <position position="270"/>
    </location>
    <ligand>
        <name>Ca(2+)</name>
        <dbReference type="ChEBI" id="CHEBI:29108"/>
        <label>1</label>
    </ligand>
</feature>
<feature type="binding site" evidence="28 41 42">
    <location>
        <position position="392"/>
    </location>
    <ligand>
        <name>Ca(2+)</name>
        <dbReference type="ChEBI" id="CHEBI:29108"/>
        <label>1</label>
    </ligand>
</feature>
<feature type="binding site" evidence="28 41 42">
    <location>
        <position position="395"/>
    </location>
    <ligand>
        <name>Ca(2+)</name>
        <dbReference type="ChEBI" id="CHEBI:29108"/>
        <label>1</label>
    </ligand>
</feature>
<feature type="binding site" evidence="28 41 42">
    <location>
        <position position="396"/>
    </location>
    <ligand>
        <name>Ca(2+)</name>
        <dbReference type="ChEBI" id="CHEBI:29108"/>
        <label>1</label>
    </ligand>
</feature>
<feature type="binding site" description="in other chain" evidence="1">
    <location>
        <position position="421"/>
    </location>
    <ligand>
        <name>ATP</name>
        <dbReference type="ChEBI" id="CHEBI:30616"/>
        <label>2</label>
        <note>ligand shared between two neighboring subunits</note>
    </ligand>
</feature>
<feature type="binding site" description="in other chain" evidence="1">
    <location>
        <position position="448"/>
    </location>
    <ligand>
        <name>ATP</name>
        <dbReference type="ChEBI" id="CHEBI:30616"/>
        <label>2</label>
        <note>ligand shared between two neighboring subunits</note>
    </ligand>
</feature>
<feature type="binding site" evidence="26 40">
    <location>
        <position position="828"/>
    </location>
    <ligand>
        <name>Ca(2+)</name>
        <dbReference type="ChEBI" id="CHEBI:29108"/>
        <label>2</label>
    </ligand>
</feature>
<feature type="binding site" evidence="26 28 40 45">
    <location>
        <position position="831"/>
    </location>
    <ligand>
        <name>Ca(2+)</name>
        <dbReference type="ChEBI" id="CHEBI:29108"/>
        <label>2</label>
    </ligand>
</feature>
<feature type="binding site" evidence="26 28 40 45">
    <location>
        <position position="865"/>
    </location>
    <ligand>
        <name>Ca(2+)</name>
        <dbReference type="ChEBI" id="CHEBI:29108"/>
        <label>2</label>
    </ligand>
</feature>
<feature type="binding site" evidence="28 36 40 45">
    <location>
        <position position="868"/>
    </location>
    <ligand>
        <name>Ca(2+)</name>
        <dbReference type="ChEBI" id="CHEBI:29108"/>
        <label>2</label>
    </ligand>
</feature>
<feature type="modified residue" description="Phosphoserine; by PKC" evidence="34">
    <location>
        <position position="1145"/>
    </location>
</feature>
<feature type="modified residue" description="Phosphoserine; by PKC" evidence="34">
    <location>
        <position position="1152"/>
    </location>
</feature>
<feature type="glycosylation site" description="N-linked (GlcNAc...) asparagine" evidence="26">
    <location>
        <position position="992"/>
    </location>
</feature>
<feature type="disulfide bond" evidence="26 28 39">
    <location>
        <begin position="993"/>
        <end position="1011"/>
    </location>
</feature>
<feature type="splice variant" id="VSP_021442" description="In isoform 2." evidence="29 31">
    <location>
        <begin position="1"/>
        <end position="174"/>
    </location>
</feature>
<feature type="splice variant" id="VSP_021443" description="In isoform 3." evidence="31">
    <location>
        <begin position="738"/>
        <end position="882"/>
    </location>
</feature>
<feature type="sequence variant" id="VAR_064042" description="In PFHB1B; attenuated desumoylation of TRPM4 resulting in constitutive sumoylation of the channel leading to impaired endocytosis and elevated channel density at the cell surface; dbSNP:rs267607142." evidence="19">
    <original>E</original>
    <variation>K</variation>
    <location>
        <position position="7"/>
    </location>
</feature>
<feature type="sequence variant" id="VAR_066761" description="In dbSNP:rs113984787." evidence="24">
    <original>A</original>
    <variation>T</variation>
    <location>
        <position position="101"/>
    </location>
</feature>
<feature type="sequence variant" id="VAR_066762" description="In dbSNP:rs144781529." evidence="24">
    <original>Y</original>
    <variation>C</variation>
    <location>
        <position position="103"/>
    </location>
</feature>
<feature type="sequence variant" id="VAR_066763" description="In PFHB1B; incomplete right bundle-branch block; dbSNP:rs172146854." evidence="24">
    <original>Q</original>
    <variation>H</variation>
    <location>
        <position position="131"/>
    </location>
</feature>
<feature type="sequence variant" id="VAR_066764" description="In PFHB1B; dbSNP:rs387907216." evidence="21">
    <original>R</original>
    <variation>W</variation>
    <location>
        <position position="164"/>
    </location>
</feature>
<feature type="sequence variant" id="VAR_066765" description="In dbSNP:rs146564314." evidence="24">
    <original>R</original>
    <variation>H</variation>
    <location>
        <position position="252"/>
    </location>
</feature>
<feature type="sequence variant" id="VAR_066766" description="In PFHB1B; right bundle-branch block; dbSNP:rs172147855." evidence="24">
    <original>Q</original>
    <variation>R</variation>
    <location>
        <position position="293"/>
    </location>
</feature>
<feature type="sequence variant" id="VAR_066767" description="In PFHB1B; atrioventricular block; dbSNP:rs201907325." evidence="21 24">
    <original>A</original>
    <variation>T</variation>
    <location>
        <position position="432"/>
    </location>
</feature>
<feature type="sequence variant" id="VAR_066768">
    <location>
        <begin position="487"/>
        <end position="498"/>
    </location>
</feature>
<feature type="sequence variant" id="VAR_066769" description="In dbSNP:rs56355369." evidence="24">
    <original>D</original>
    <variation>A</variation>
    <location>
        <position position="561"/>
    </location>
</feature>
<feature type="sequence variant" id="VAR_066770" description="In PFHB1B; atrioventricular block; dbSNP:rs172149856." evidence="24">
    <original>G</original>
    <variation>S</variation>
    <location>
        <position position="582"/>
    </location>
</feature>
<feature type="sequence variant" id="VAR_066771" description="In PFHB1B; atrioventricular block; dbSNP:rs172150857." evidence="24">
    <original>Y</original>
    <variation>H</variation>
    <location>
        <position position="790"/>
    </location>
</feature>
<feature type="sequence variant" id="VAR_066772" description="In PFHB1B; right bundle-branch block; dbSNP:rs200038418." evidence="21 24">
    <original>G</original>
    <variation>D</variation>
    <location>
        <position position="844"/>
    </location>
</feature>
<feature type="sequence variant" id="VAR_066773" description="In dbSNP:rs172155862." evidence="24">
    <original>Q</original>
    <variation>R</variation>
    <location>
        <position position="854"/>
    </location>
</feature>
<feature type="sequence variant" id="VAR_066774" description="In PFHB1B; atrioventricular block; dbSNP:rs172151858." evidence="24">
    <original>K</original>
    <variation>R</variation>
    <location>
        <position position="914"/>
    </location>
</feature>
<feature type="sequence variant" id="VAR_066775" description="In PFHB1B; incomplete right bundle-branch block; dbSNP:rs172152859." evidence="24">
    <original>P</original>
    <variation>S</variation>
    <location>
        <position position="970"/>
    </location>
</feature>
<feature type="sequence variant" id="VAR_083166" description="In EKVP6; increased calcium activated cation channel activity; increased keratinocytes proliferation and differentiation; no effect on localization at cell membrane; dbSNP:rs1278993777." evidence="27">
    <original>I</original>
    <variation>M</variation>
    <location>
        <position position="1033"/>
    </location>
</feature>
<feature type="sequence variant" id="VAR_083167" description="In EKVP6; increased calcium activated cation channel activity; increased keratinocytes proliferation and differentiation; no effect on localization at cell membrane; dbSNP:rs1369949906." evidence="27">
    <original>I</original>
    <variation>T</variation>
    <location>
        <position position="1040"/>
    </location>
</feature>
<feature type="sequence variant" id="VAR_066776" description="In dbSNP:rs150391806." evidence="24">
    <original>P</original>
    <variation>L</variation>
    <location>
        <position position="1204"/>
    </location>
</feature>
<feature type="mutagenesis site" description="Abolishes ability to restore sensitivity to Ca(2+) after desensitization." evidence="12">
    <original>L</original>
    <variation>A</variation>
    <variation>C</variation>
    <location>
        <position position="275"/>
    </location>
</feature>
<feature type="mutagenesis site" description="No effect." evidence="12">
    <original>I</original>
    <variation>N</variation>
    <location>
        <position position="278"/>
    </location>
</feature>
<feature type="mutagenesis site" description="No effect." evidence="12">
    <original>D</original>
    <variation>N</variation>
    <location>
        <position position="279"/>
    </location>
</feature>
<feature type="mutagenesis site" description="No effect." evidence="12">
    <original>G</original>
    <variation>A</variation>
    <location>
        <position position="324"/>
    </location>
</feature>
<feature type="mutagenesis site" description="Abolishes ability to restore sensitivity to Ca(2+) after desensitization." evidence="12">
    <original>G</original>
    <variation>A</variation>
    <location>
        <position position="325"/>
    </location>
</feature>
<feature type="mutagenesis site" description="No effect." evidence="12">
    <original>R</original>
    <variation>A</variation>
    <location>
        <position position="327"/>
    </location>
</feature>
<feature type="mutagenesis site" description="Loss of the temperature-induced potentiation. Inability to activate at negative membrane potentials." evidence="28">
    <original>E</original>
    <variation>A</variation>
    <location>
        <position position="396"/>
    </location>
</feature>
<feature type="mutagenesis site" description="Becomes insensitive to decavanadate's voltage modulation effect." evidence="28">
    <original>R</original>
    <variation>A</variation>
    <location>
        <position position="597"/>
    </location>
</feature>
<feature type="mutagenesis site" description="Becomes insensitive to decavanadate's voltage modulation effect." evidence="28">
    <original>K</original>
    <variation>A</variation>
    <variation>M</variation>
    <location>
        <position position="613"/>
    </location>
</feature>
<feature type="mutagenesis site" description="Becomes insensitive to decavanadate's voltage modulation effect." evidence="28">
    <original>R</original>
    <variation>A</variation>
    <location>
        <position position="664"/>
    </location>
</feature>
<feature type="mutagenesis site" description="Becomes insensitive to decavanadate's voltage modulation effect." evidence="28">
    <original>K</original>
    <variation>A</variation>
    <location>
        <position position="925"/>
    </location>
</feature>
<feature type="mutagenesis site" description="Alters the monovalent cation permeability sequence and results in a pore with moderate Ca(2+) permeability." evidence="13">
    <original>Q</original>
    <variation>E</variation>
    <location>
        <position position="977"/>
    </location>
</feature>
<feature type="mutagenesis site" description="Induces a functional channel that combines the gating hallmarks of TRPM4 (activation by Ca(2+)) with TRPV6-like sensitivity to block by extracellular Ca(2+) and Mg(2+) as well as Ca(2+) permeation." evidence="13">
    <original>EDMDVA</original>
    <variation>TIIDGP</variation>
    <location>
        <begin position="981"/>
        <end position="986"/>
    </location>
</feature>
<feature type="mutagenesis site" description="Results in a channel with normal permeability properties but with a reduced sensitivity to block by intracellular spermine." evidence="13">
    <original>E</original>
    <variation>A</variation>
    <location>
        <position position="981"/>
    </location>
</feature>
<feature type="mutagenesis site" description="Results in a functional channel that exhibits extremely fast desensitization, possibly indicating destabilization of the pore." evidence="13">
    <original>D</original>
    <variation>A</variation>
    <location>
        <position position="982"/>
    </location>
</feature>
<feature type="mutagenesis site" description="Results in a non-functional channel with a dominant negative phenotype." evidence="13">
    <original>D</original>
    <variation>A</variation>
    <location>
        <position position="984"/>
    </location>
</feature>
<feature type="mutagenesis site" description="Becomes insensitive to decavanadate's voltage modulation effect." evidence="28">
    <original>K</original>
    <variation>A</variation>
    <location>
        <position position="1049"/>
    </location>
</feature>
<feature type="mutagenesis site" description="Does not affect PIP2-binding." evidence="16">
    <original>K</original>
    <variation>Q</variation>
    <location>
        <position position="1059"/>
    </location>
</feature>
<feature type="mutagenesis site" description="Does not affect PIP2-binding." evidence="16">
    <original>R</original>
    <variation>Q</variation>
    <location>
        <position position="1072"/>
    </location>
</feature>
<feature type="mutagenesis site" description="Results in a channel with very rapid desensitization and highly reduced sensitivity to PIP2." evidence="16">
    <location>
        <begin position="1136"/>
        <end position="1141"/>
    </location>
</feature>
<feature type="mutagenesis site" description="Decreases the sensitivity to Ca(2+)." evidence="12">
    <original>S</original>
    <variation>A</variation>
    <location>
        <position position="1145"/>
    </location>
</feature>
<feature type="mutagenesis site" description="Decreases the sensitivity to Ca(2+)." evidence="12">
    <original>S</original>
    <variation>A</variation>
    <location>
        <position position="1152"/>
    </location>
</feature>
<feature type="sequence conflict" description="In Ref. 6; BAA90907." evidence="32" ref="6">
    <original>K</original>
    <variation>E</variation>
    <location>
        <position position="1149"/>
    </location>
</feature>
<feature type="sequence conflict" description="In Ref. 6; BAA90907." evidence="32" ref="6">
    <original>P</original>
    <variation>L</variation>
    <location>
        <position position="1207"/>
    </location>
</feature>
<feature type="sequence conflict" description="In Ref. 6; BAA90907." evidence="32" ref="6">
    <original>P</original>
    <variation>H</variation>
    <location>
        <position position="1210"/>
    </location>
</feature>
<feature type="sequence conflict" description="In Ref. 6; BAA90907." evidence="32" ref="6">
    <original>D</original>
    <variation>E</variation>
    <location>
        <position position="1214"/>
    </location>
</feature>
<feature type="helix" evidence="51">
    <location>
        <begin position="8"/>
        <end position="10"/>
    </location>
</feature>
<feature type="helix" evidence="49">
    <location>
        <begin position="11"/>
        <end position="14"/>
    </location>
</feature>
<feature type="strand" evidence="49">
    <location>
        <begin position="16"/>
        <end position="19"/>
    </location>
</feature>
<feature type="strand" evidence="49">
    <location>
        <begin position="36"/>
        <end position="38"/>
    </location>
</feature>
<feature type="strand" evidence="48">
    <location>
        <begin position="41"/>
        <end position="44"/>
    </location>
</feature>
<feature type="turn" evidence="49">
    <location>
        <begin position="63"/>
        <end position="66"/>
    </location>
</feature>
<feature type="strand" evidence="49">
    <location>
        <begin position="68"/>
        <end position="71"/>
    </location>
</feature>
<feature type="strand" evidence="52">
    <location>
        <begin position="76"/>
        <end position="78"/>
    </location>
</feature>
<feature type="strand" evidence="49">
    <location>
        <begin position="79"/>
        <end position="84"/>
    </location>
</feature>
<feature type="strand" evidence="49">
    <location>
        <begin position="89"/>
        <end position="96"/>
    </location>
</feature>
<feature type="helix" evidence="49">
    <location>
        <begin position="99"/>
        <end position="108"/>
    </location>
</feature>
<feature type="strand" evidence="49">
    <location>
        <begin position="118"/>
        <end position="122"/>
    </location>
</feature>
<feature type="strand" evidence="49">
    <location>
        <begin position="127"/>
        <end position="129"/>
    </location>
</feature>
<feature type="helix" evidence="49">
    <location>
        <begin position="132"/>
        <end position="149"/>
    </location>
</feature>
<feature type="strand" evidence="49">
    <location>
        <begin position="155"/>
        <end position="160"/>
    </location>
</feature>
<feature type="helix" evidence="49">
    <location>
        <begin position="161"/>
        <end position="175"/>
    </location>
</feature>
<feature type="strand" evidence="47">
    <location>
        <begin position="177"/>
        <end position="179"/>
    </location>
</feature>
<feature type="strand" evidence="49">
    <location>
        <begin position="187"/>
        <end position="190"/>
    </location>
</feature>
<feature type="strand" evidence="49">
    <location>
        <begin position="193"/>
        <end position="195"/>
    </location>
</feature>
<feature type="turn" evidence="49">
    <location>
        <begin position="197"/>
        <end position="200"/>
    </location>
</feature>
<feature type="turn" evidence="47">
    <location>
        <begin position="202"/>
        <end position="205"/>
    </location>
</feature>
<feature type="strand" evidence="49">
    <location>
        <begin position="206"/>
        <end position="208"/>
    </location>
</feature>
<feature type="strand" evidence="49">
    <location>
        <begin position="230"/>
        <end position="236"/>
    </location>
</feature>
<feature type="strand" evidence="49">
    <location>
        <begin position="238"/>
        <end position="240"/>
    </location>
</feature>
<feature type="helix" evidence="49">
    <location>
        <begin position="247"/>
        <end position="258"/>
    </location>
</feature>
<feature type="strand" evidence="49">
    <location>
        <begin position="261"/>
        <end position="263"/>
    </location>
</feature>
<feature type="helix" evidence="49">
    <location>
        <begin position="265"/>
        <end position="267"/>
    </location>
</feature>
<feature type="strand" evidence="47">
    <location>
        <begin position="268"/>
        <end position="270"/>
    </location>
</feature>
<feature type="strand" evidence="49">
    <location>
        <begin position="273"/>
        <end position="277"/>
    </location>
</feature>
<feature type="helix" evidence="49">
    <location>
        <begin position="282"/>
        <end position="293"/>
    </location>
</feature>
<feature type="strand" evidence="49">
    <location>
        <begin position="298"/>
        <end position="301"/>
    </location>
</feature>
<feature type="turn" evidence="49">
    <location>
        <begin position="306"/>
        <end position="308"/>
    </location>
</feature>
<feature type="helix" evidence="49">
    <location>
        <begin position="309"/>
        <end position="316"/>
    </location>
</feature>
<feature type="turn" evidence="49">
    <location>
        <begin position="323"/>
        <end position="325"/>
    </location>
</feature>
<feature type="helix" evidence="49">
    <location>
        <begin position="326"/>
        <end position="335"/>
    </location>
</feature>
<feature type="turn" evidence="49">
    <location>
        <begin position="340"/>
        <end position="342"/>
    </location>
</feature>
<feature type="strand" evidence="48">
    <location>
        <begin position="343"/>
        <end position="345"/>
    </location>
</feature>
<feature type="helix" evidence="49">
    <location>
        <begin position="346"/>
        <end position="355"/>
    </location>
</feature>
<feature type="turn" evidence="49">
    <location>
        <begin position="356"/>
        <end position="360"/>
    </location>
</feature>
<feature type="strand" evidence="49">
    <location>
        <begin position="362"/>
        <end position="364"/>
    </location>
</feature>
<feature type="turn" evidence="49">
    <location>
        <begin position="367"/>
        <end position="369"/>
    </location>
</feature>
<feature type="strand" evidence="47">
    <location>
        <begin position="370"/>
        <end position="372"/>
    </location>
</feature>
<feature type="helix" evidence="49">
    <location>
        <begin position="374"/>
        <end position="385"/>
    </location>
</feature>
<feature type="helix" evidence="49">
    <location>
        <begin position="391"/>
        <end position="393"/>
    </location>
</feature>
<feature type="helix" evidence="49">
    <location>
        <begin position="394"/>
        <end position="402"/>
    </location>
</feature>
<feature type="helix" evidence="49">
    <location>
        <begin position="407"/>
        <end position="411"/>
    </location>
</feature>
<feature type="strand" evidence="49">
    <location>
        <begin position="416"/>
        <end position="418"/>
    </location>
</feature>
<feature type="helix" evidence="49">
    <location>
        <begin position="422"/>
        <end position="434"/>
    </location>
</feature>
<feature type="helix" evidence="49">
    <location>
        <begin position="438"/>
        <end position="446"/>
    </location>
</feature>
<feature type="helix" evidence="49">
    <location>
        <begin position="451"/>
        <end position="454"/>
    </location>
</feature>
<feature type="helix" evidence="49">
    <location>
        <begin position="457"/>
        <end position="465"/>
    </location>
</feature>
<feature type="helix" evidence="49">
    <location>
        <begin position="472"/>
        <end position="479"/>
    </location>
</feature>
<feature type="helix" evidence="49">
    <location>
        <begin position="503"/>
        <end position="511"/>
    </location>
</feature>
<feature type="helix" evidence="49">
    <location>
        <begin position="558"/>
        <end position="569"/>
    </location>
</feature>
<feature type="helix" evidence="49">
    <location>
        <begin position="572"/>
        <end position="580"/>
    </location>
</feature>
<feature type="helix" evidence="49">
    <location>
        <begin position="585"/>
        <end position="602"/>
    </location>
</feature>
<feature type="strand" evidence="50">
    <location>
        <begin position="604"/>
        <end position="607"/>
    </location>
</feature>
<feature type="helix" evidence="49">
    <location>
        <begin position="608"/>
        <end position="633"/>
    </location>
</feature>
<feature type="helix" evidence="49">
    <location>
        <begin position="635"/>
        <end position="641"/>
    </location>
</feature>
<feature type="turn" evidence="49">
    <location>
        <begin position="648"/>
        <end position="650"/>
    </location>
</feature>
<feature type="helix" evidence="49">
    <location>
        <begin position="654"/>
        <end position="661"/>
    </location>
</feature>
<feature type="helix" evidence="49">
    <location>
        <begin position="664"/>
        <end position="668"/>
    </location>
</feature>
<feature type="helix" evidence="49">
    <location>
        <begin position="670"/>
        <end position="680"/>
    </location>
</feature>
<feature type="turn" evidence="49">
    <location>
        <begin position="681"/>
        <end position="683"/>
    </location>
</feature>
<feature type="helix" evidence="49">
    <location>
        <begin position="690"/>
        <end position="698"/>
    </location>
</feature>
<feature type="helix" evidence="49">
    <location>
        <begin position="700"/>
        <end position="704"/>
    </location>
</feature>
<feature type="strand" evidence="47">
    <location>
        <begin position="705"/>
        <end position="708"/>
    </location>
</feature>
<feature type="helix" evidence="49">
    <location>
        <begin position="767"/>
        <end position="777"/>
    </location>
</feature>
<feature type="helix" evidence="49">
    <location>
        <begin position="779"/>
        <end position="802"/>
    </location>
</feature>
<feature type="strand" evidence="49">
    <location>
        <begin position="807"/>
        <end position="809"/>
    </location>
</feature>
<feature type="helix" evidence="49">
    <location>
        <begin position="812"/>
        <end position="833"/>
    </location>
</feature>
<feature type="helix" evidence="49">
    <location>
        <begin position="852"/>
        <end position="860"/>
    </location>
</feature>
<feature type="helix" evidence="49">
    <location>
        <begin position="863"/>
        <end position="883"/>
    </location>
</feature>
<feature type="strand" evidence="53">
    <location>
        <begin position="884"/>
        <end position="886"/>
    </location>
</feature>
<feature type="helix" evidence="49">
    <location>
        <begin position="888"/>
        <end position="905"/>
    </location>
</feature>
<feature type="helix" evidence="49">
    <location>
        <begin position="906"/>
        <end position="911"/>
    </location>
</feature>
<feature type="turn" evidence="49">
    <location>
        <begin position="914"/>
        <end position="916"/>
    </location>
</feature>
<feature type="helix" evidence="49">
    <location>
        <begin position="917"/>
        <end position="925"/>
    </location>
</feature>
<feature type="helix" evidence="49">
    <location>
        <begin position="927"/>
        <end position="952"/>
    </location>
</feature>
<feature type="helix" evidence="49">
    <location>
        <begin position="959"/>
        <end position="974"/>
    </location>
</feature>
<feature type="helix" evidence="49">
    <location>
        <begin position="980"/>
        <end position="983"/>
    </location>
</feature>
<feature type="helix" evidence="49">
    <location>
        <begin position="985"/>
        <end position="987"/>
    </location>
</feature>
<feature type="strand" evidence="48">
    <location>
        <begin position="988"/>
        <end position="990"/>
    </location>
</feature>
<feature type="strand" evidence="49">
    <location>
        <begin position="995"/>
        <end position="998"/>
    </location>
</feature>
<feature type="strand" evidence="48">
    <location>
        <begin position="1000"/>
        <end position="1002"/>
    </location>
</feature>
<feature type="strand" evidence="49">
    <location>
        <begin position="1006"/>
        <end position="1008"/>
    </location>
</feature>
<feature type="helix" evidence="49">
    <location>
        <begin position="1017"/>
        <end position="1032"/>
    </location>
</feature>
<feature type="helix" evidence="49">
    <location>
        <begin position="1034"/>
        <end position="1049"/>
    </location>
</feature>
<feature type="helix" evidence="49">
    <location>
        <begin position="1051"/>
        <end position="1070"/>
    </location>
</feature>
<feature type="helix" evidence="49">
    <location>
        <begin position="1077"/>
        <end position="1079"/>
    </location>
</feature>
<feature type="helix" evidence="49">
    <location>
        <begin position="1080"/>
        <end position="1087"/>
    </location>
</feature>
<feature type="turn" evidence="46">
    <location>
        <begin position="1089"/>
        <end position="1092"/>
    </location>
</feature>
<feature type="helix" evidence="49">
    <location>
        <begin position="1116"/>
        <end position="1141"/>
    </location>
</feature>
<feature type="helix" evidence="49">
    <location>
        <begin position="1144"/>
        <end position="1176"/>
    </location>
</feature>
<protein>
    <recommendedName>
        <fullName>Transient receptor potential cation channel subfamily M member 4</fullName>
        <shortName>hTRPM4</shortName>
    </recommendedName>
    <alternativeName>
        <fullName>Calcium-activated non-selective cation channel 1</fullName>
    </alternativeName>
    <alternativeName>
        <fullName>Long transient receptor potential channel 4</fullName>
        <shortName>LTrpC-4</shortName>
        <shortName>LTrpC4</shortName>
    </alternativeName>
    <alternativeName>
        <fullName>Melastatin-4</fullName>
    </alternativeName>
</protein>
<dbReference type="EMBL" id="AY046396">
    <property type="protein sequence ID" value="AAL02142.1"/>
    <property type="molecule type" value="mRNA"/>
</dbReference>
<dbReference type="EMBL" id="AF497623">
    <property type="protein sequence ID" value="AAM18083.1"/>
    <property type="molecule type" value="mRNA"/>
</dbReference>
<dbReference type="EMBL" id="AY297044">
    <property type="protein sequence ID" value="AAP44473.1"/>
    <property type="molecule type" value="mRNA"/>
</dbReference>
<dbReference type="EMBL" id="AY297045">
    <property type="protein sequence ID" value="AAP44474.1"/>
    <property type="molecule type" value="mRNA"/>
</dbReference>
<dbReference type="EMBL" id="AY297046">
    <property type="protein sequence ID" value="AAP44475.1"/>
    <property type="molecule type" value="mRNA"/>
</dbReference>
<dbReference type="EMBL" id="AJ575813">
    <property type="protein sequence ID" value="CAE05941.1"/>
    <property type="molecule type" value="mRNA"/>
</dbReference>
<dbReference type="EMBL" id="AK000048">
    <property type="protein sequence ID" value="BAA90907.1"/>
    <property type="status" value="ALT_SEQ"/>
    <property type="molecule type" value="mRNA"/>
</dbReference>
<dbReference type="EMBL" id="AK292862">
    <property type="protein sequence ID" value="BAF85551.1"/>
    <property type="molecule type" value="mRNA"/>
</dbReference>
<dbReference type="EMBL" id="BC132727">
    <property type="protein sequence ID" value="AAI32728.1"/>
    <property type="molecule type" value="mRNA"/>
</dbReference>
<dbReference type="CCDS" id="CCDS33073.1">
    <molecule id="Q8TD43-1"/>
</dbReference>
<dbReference type="CCDS" id="CCDS56098.1">
    <molecule id="Q8TD43-3"/>
</dbReference>
<dbReference type="RefSeq" id="NP_001182156.1">
    <molecule id="Q8TD43-3"/>
    <property type="nucleotide sequence ID" value="NM_001195227.2"/>
</dbReference>
<dbReference type="RefSeq" id="NP_001308212.1">
    <molecule id="Q8TD43-2"/>
    <property type="nucleotide sequence ID" value="NM_001321283.2"/>
</dbReference>
<dbReference type="RefSeq" id="NP_060106.2">
    <molecule id="Q8TD43-1"/>
    <property type="nucleotide sequence ID" value="NM_017636.3"/>
</dbReference>
<dbReference type="PDB" id="5WP6">
    <property type="method" value="EM"/>
    <property type="resolution" value="3.80 A"/>
    <property type="chains" value="A/B/C/D=1-1214"/>
</dbReference>
<dbReference type="PDB" id="6BQR">
    <property type="method" value="EM"/>
    <property type="resolution" value="3.20 A"/>
    <property type="chains" value="A/B/C/D=75-1168"/>
</dbReference>
<dbReference type="PDB" id="6BQV">
    <property type="method" value="EM"/>
    <property type="resolution" value="3.10 A"/>
    <property type="chains" value="A/B/C/D=2-1214"/>
</dbReference>
<dbReference type="PDB" id="6BWI">
    <property type="method" value="EM"/>
    <property type="resolution" value="3.70 A"/>
    <property type="chains" value="A/B/C/D=395-1176"/>
</dbReference>
<dbReference type="PDB" id="8RCR">
    <property type="method" value="EM"/>
    <property type="resolution" value="3.60 A"/>
    <property type="chains" value="A/B/C/D=421-1168"/>
</dbReference>
<dbReference type="PDB" id="8RCU">
    <property type="method" value="EM"/>
    <property type="resolution" value="3.50 A"/>
    <property type="chains" value="A/B/C/D=421-1168"/>
</dbReference>
<dbReference type="PDB" id="8RD9">
    <property type="method" value="EM"/>
    <property type="resolution" value="4.30 A"/>
    <property type="chains" value="A/C/D/E=420-1168"/>
</dbReference>
<dbReference type="PDB" id="9B8W">
    <property type="method" value="EM"/>
    <property type="resolution" value="3.10 A"/>
    <property type="chains" value="A/B/C/D=7-1172"/>
</dbReference>
<dbReference type="PDB" id="9B8X">
    <property type="method" value="EM"/>
    <property type="resolution" value="3.00 A"/>
    <property type="chains" value="A=7-1177"/>
</dbReference>
<dbReference type="PDB" id="9B8Y">
    <property type="method" value="EM"/>
    <property type="resolution" value="3.20 A"/>
    <property type="chains" value="A/B/C/D=7-1172"/>
</dbReference>
<dbReference type="PDB" id="9B8Z">
    <property type="method" value="EM"/>
    <property type="resolution" value="3.40 A"/>
    <property type="chains" value="A/B/C/D=7-1172"/>
</dbReference>
<dbReference type="PDB" id="9B90">
    <property type="method" value="EM"/>
    <property type="resolution" value="3.40 A"/>
    <property type="chains" value="A/B/C/D=7-1172"/>
</dbReference>
<dbReference type="PDB" id="9B91">
    <property type="method" value="EM"/>
    <property type="resolution" value="3.30 A"/>
    <property type="chains" value="A=7-1177"/>
</dbReference>
<dbReference type="PDB" id="9B92">
    <property type="method" value="EM"/>
    <property type="resolution" value="3.50 A"/>
    <property type="chains" value="A/B/C/D=7-1177"/>
</dbReference>
<dbReference type="PDB" id="9B93">
    <property type="method" value="EM"/>
    <property type="resolution" value="3.10 A"/>
    <property type="chains" value="A/B/C/D=7-1177"/>
</dbReference>
<dbReference type="PDB" id="9B94">
    <property type="method" value="EM"/>
    <property type="resolution" value="3.10 A"/>
    <property type="chains" value="A/B/C/D=1-1214"/>
</dbReference>
<dbReference type="PDBsum" id="5WP6"/>
<dbReference type="PDBsum" id="6BQR"/>
<dbReference type="PDBsum" id="6BQV"/>
<dbReference type="PDBsum" id="6BWI"/>
<dbReference type="PDBsum" id="8RCR"/>
<dbReference type="PDBsum" id="8RCU"/>
<dbReference type="PDBsum" id="8RD9"/>
<dbReference type="PDBsum" id="9B8W"/>
<dbReference type="PDBsum" id="9B8X"/>
<dbReference type="PDBsum" id="9B8Y"/>
<dbReference type="PDBsum" id="9B8Z"/>
<dbReference type="PDBsum" id="9B90"/>
<dbReference type="PDBsum" id="9B91"/>
<dbReference type="PDBsum" id="9B92"/>
<dbReference type="PDBsum" id="9B93"/>
<dbReference type="PDBsum" id="9B94"/>
<dbReference type="EMDB" id="EMD-19057"/>
<dbReference type="EMDB" id="EMD-19061"/>
<dbReference type="EMDB" id="EMD-19069"/>
<dbReference type="EMDB" id="EMD-44360"/>
<dbReference type="EMDB" id="EMD-44361"/>
<dbReference type="EMDB" id="EMD-44362"/>
<dbReference type="EMDB" id="EMD-44363"/>
<dbReference type="EMDB" id="EMD-44364"/>
<dbReference type="EMDB" id="EMD-44365"/>
<dbReference type="EMDB" id="EMD-44366"/>
<dbReference type="EMDB" id="EMD-44367"/>
<dbReference type="EMDB" id="EMD-44368"/>
<dbReference type="EMDB" id="EMD-44369"/>
<dbReference type="EMDB" id="EMD-7132"/>
<dbReference type="EMDB" id="EMD-7133"/>
<dbReference type="EMDB" id="EMD-7299"/>
<dbReference type="EMDB" id="EMD-8871"/>
<dbReference type="SMR" id="Q8TD43"/>
<dbReference type="BioGRID" id="120154">
    <property type="interactions" value="54"/>
</dbReference>
<dbReference type="FunCoup" id="Q8TD43">
    <property type="interactions" value="368"/>
</dbReference>
<dbReference type="IntAct" id="Q8TD43">
    <property type="interactions" value="36"/>
</dbReference>
<dbReference type="MINT" id="Q8TD43"/>
<dbReference type="STRING" id="9606.ENSP00000252826"/>
<dbReference type="BindingDB" id="Q8TD43"/>
<dbReference type="ChEMBL" id="CHEMBL1628469"/>
<dbReference type="DrugBank" id="DB16833">
    <property type="generic name" value="Adenosine disphosphate"/>
</dbReference>
<dbReference type="DrugBank" id="DB01016">
    <property type="generic name" value="Glyburide"/>
</dbReference>
<dbReference type="DrugCentral" id="Q8TD43"/>
<dbReference type="GuidetoPHARMACOLOGY" id="496"/>
<dbReference type="TCDB" id="1.A.4.5.4">
    <property type="family name" value="the transient receptor potential ca2+/cation channel (trp-cc) family"/>
</dbReference>
<dbReference type="GlyCosmos" id="Q8TD43">
    <property type="glycosylation" value="1 site, No reported glycans"/>
</dbReference>
<dbReference type="GlyGen" id="Q8TD43">
    <property type="glycosylation" value="1 site"/>
</dbReference>
<dbReference type="iPTMnet" id="Q8TD43"/>
<dbReference type="PhosphoSitePlus" id="Q8TD43"/>
<dbReference type="SwissPalm" id="Q8TD43"/>
<dbReference type="BioMuta" id="TRPM4"/>
<dbReference type="DMDM" id="74715868"/>
<dbReference type="jPOST" id="Q8TD43"/>
<dbReference type="MassIVE" id="Q8TD43"/>
<dbReference type="PaxDb" id="9606-ENSP00000252826"/>
<dbReference type="PeptideAtlas" id="Q8TD43"/>
<dbReference type="ProteomicsDB" id="74233">
    <molecule id="Q8TD43-1"/>
</dbReference>
<dbReference type="ProteomicsDB" id="74234">
    <molecule id="Q8TD43-2"/>
</dbReference>
<dbReference type="ProteomicsDB" id="74235">
    <molecule id="Q8TD43-3"/>
</dbReference>
<dbReference type="Pumba" id="Q8TD43"/>
<dbReference type="ABCD" id="Q8TD43">
    <property type="antibodies" value="1 sequenced antibody"/>
</dbReference>
<dbReference type="Antibodypedia" id="31943">
    <property type="antibodies" value="315 antibodies from 30 providers"/>
</dbReference>
<dbReference type="DNASU" id="54795"/>
<dbReference type="Ensembl" id="ENST00000252826.10">
    <molecule id="Q8TD43-1"/>
    <property type="protein sequence ID" value="ENSP00000252826.4"/>
    <property type="gene ID" value="ENSG00000130529.16"/>
</dbReference>
<dbReference type="Ensembl" id="ENST00000427978.6">
    <molecule id="Q8TD43-3"/>
    <property type="protein sequence ID" value="ENSP00000407492.1"/>
    <property type="gene ID" value="ENSG00000130529.16"/>
</dbReference>
<dbReference type="GeneID" id="54795"/>
<dbReference type="KEGG" id="hsa:54795"/>
<dbReference type="MANE-Select" id="ENST00000252826.10">
    <property type="protein sequence ID" value="ENSP00000252826.4"/>
    <property type="RefSeq nucleotide sequence ID" value="NM_017636.4"/>
    <property type="RefSeq protein sequence ID" value="NP_060106.2"/>
</dbReference>
<dbReference type="UCSC" id="uc002pmw.4">
    <molecule id="Q8TD43-1"/>
    <property type="organism name" value="human"/>
</dbReference>
<dbReference type="AGR" id="HGNC:17993"/>
<dbReference type="CTD" id="54795"/>
<dbReference type="DisGeNET" id="54795"/>
<dbReference type="GeneCards" id="TRPM4"/>
<dbReference type="GeneReviews" id="TRPM4"/>
<dbReference type="HGNC" id="HGNC:17993">
    <property type="gene designation" value="TRPM4"/>
</dbReference>
<dbReference type="HPA" id="ENSG00000130529">
    <property type="expression patterns" value="Low tissue specificity"/>
</dbReference>
<dbReference type="MalaCards" id="TRPM4"/>
<dbReference type="MIM" id="604559">
    <property type="type" value="phenotype"/>
</dbReference>
<dbReference type="MIM" id="606936">
    <property type="type" value="gene"/>
</dbReference>
<dbReference type="MIM" id="618531">
    <property type="type" value="phenotype"/>
</dbReference>
<dbReference type="neXtProt" id="NX_Q8TD43"/>
<dbReference type="OpenTargets" id="ENSG00000130529"/>
<dbReference type="Orphanet" id="130">
    <property type="disease" value="Brugada syndrome"/>
</dbReference>
<dbReference type="Orphanet" id="871">
    <property type="disease" value="Familial progressive cardiac conduction defect"/>
</dbReference>
<dbReference type="Orphanet" id="316">
    <property type="disease" value="Progressive symmetric erythrokeratodermia"/>
</dbReference>
<dbReference type="PharmGKB" id="PA38272"/>
<dbReference type="VEuPathDB" id="HostDB:ENSG00000130529"/>
<dbReference type="eggNOG" id="KOG3614">
    <property type="taxonomic scope" value="Eukaryota"/>
</dbReference>
<dbReference type="GeneTree" id="ENSGT00940000158693"/>
<dbReference type="HOGENOM" id="CLU_001390_0_1_1"/>
<dbReference type="InParanoid" id="Q8TD43"/>
<dbReference type="OMA" id="ARWRQFW"/>
<dbReference type="OrthoDB" id="310870at2759"/>
<dbReference type="PAN-GO" id="Q8TD43">
    <property type="GO annotations" value="4 GO annotations based on evolutionary models"/>
</dbReference>
<dbReference type="PhylomeDB" id="Q8TD43"/>
<dbReference type="TreeFam" id="TF314204"/>
<dbReference type="PathwayCommons" id="Q8TD43"/>
<dbReference type="Reactome" id="R-HSA-3295583">
    <property type="pathway name" value="TRP channels"/>
</dbReference>
<dbReference type="Reactome" id="R-HSA-9717207">
    <property type="pathway name" value="Sensory perception of sweet, bitter, and umami (glutamate) taste"/>
</dbReference>
<dbReference type="SignaLink" id="Q8TD43"/>
<dbReference type="SIGNOR" id="Q8TD43"/>
<dbReference type="BioGRID-ORCS" id="54795">
    <property type="hits" value="14 hits in 1162 CRISPR screens"/>
</dbReference>
<dbReference type="ChiTaRS" id="TRPM4">
    <property type="organism name" value="human"/>
</dbReference>
<dbReference type="GeneWiki" id="TRPM4"/>
<dbReference type="GenomeRNAi" id="54795"/>
<dbReference type="Pharos" id="Q8TD43">
    <property type="development level" value="Tchem"/>
</dbReference>
<dbReference type="PRO" id="PR:Q8TD43"/>
<dbReference type="Proteomes" id="UP000005640">
    <property type="component" value="Chromosome 19"/>
</dbReference>
<dbReference type="RNAct" id="Q8TD43">
    <property type="molecule type" value="protein"/>
</dbReference>
<dbReference type="Bgee" id="ENSG00000130529">
    <property type="expression patterns" value="Expressed in mucosa of transverse colon and 123 other cell types or tissues"/>
</dbReference>
<dbReference type="ExpressionAtlas" id="Q8TD43">
    <property type="expression patterns" value="baseline and differential"/>
</dbReference>
<dbReference type="GO" id="GO:0005783">
    <property type="term" value="C:endoplasmic reticulum"/>
    <property type="evidence" value="ECO:0000314"/>
    <property type="project" value="UniProtKB"/>
</dbReference>
<dbReference type="GO" id="GO:0005794">
    <property type="term" value="C:Golgi apparatus"/>
    <property type="evidence" value="ECO:0000314"/>
    <property type="project" value="UniProtKB"/>
</dbReference>
<dbReference type="GO" id="GO:0016020">
    <property type="term" value="C:membrane"/>
    <property type="evidence" value="ECO:0000314"/>
    <property type="project" value="UniProtKB"/>
</dbReference>
<dbReference type="GO" id="GO:0043025">
    <property type="term" value="C:neuronal cell body"/>
    <property type="evidence" value="ECO:0000250"/>
    <property type="project" value="BHF-UCL"/>
</dbReference>
<dbReference type="GO" id="GO:0005654">
    <property type="term" value="C:nucleoplasm"/>
    <property type="evidence" value="ECO:0000314"/>
    <property type="project" value="HPA"/>
</dbReference>
<dbReference type="GO" id="GO:0005886">
    <property type="term" value="C:plasma membrane"/>
    <property type="evidence" value="ECO:0000314"/>
    <property type="project" value="HPA"/>
</dbReference>
<dbReference type="GO" id="GO:0034706">
    <property type="term" value="C:sodium channel complex"/>
    <property type="evidence" value="ECO:0000314"/>
    <property type="project" value="BHF-UCL"/>
</dbReference>
<dbReference type="GO" id="GO:0005524">
    <property type="term" value="F:ATP binding"/>
    <property type="evidence" value="ECO:0007669"/>
    <property type="project" value="UniProtKB-KW"/>
</dbReference>
<dbReference type="GO" id="GO:0005262">
    <property type="term" value="F:calcium channel activity"/>
    <property type="evidence" value="ECO:0007669"/>
    <property type="project" value="Ensembl"/>
</dbReference>
<dbReference type="GO" id="GO:0005509">
    <property type="term" value="F:calcium ion binding"/>
    <property type="evidence" value="ECO:0000314"/>
    <property type="project" value="UniProtKB"/>
</dbReference>
<dbReference type="GO" id="GO:0005227">
    <property type="term" value="F:calcium-activated cation channel activity"/>
    <property type="evidence" value="ECO:0000314"/>
    <property type="project" value="UniProtKB"/>
</dbReference>
<dbReference type="GO" id="GO:0005516">
    <property type="term" value="F:calmodulin binding"/>
    <property type="evidence" value="ECO:0007669"/>
    <property type="project" value="UniProtKB-KW"/>
</dbReference>
<dbReference type="GO" id="GO:0042802">
    <property type="term" value="F:identical protein binding"/>
    <property type="evidence" value="ECO:0000353"/>
    <property type="project" value="IntAct"/>
</dbReference>
<dbReference type="GO" id="GO:0005272">
    <property type="term" value="F:sodium channel activity"/>
    <property type="evidence" value="ECO:0000304"/>
    <property type="project" value="Reactome"/>
</dbReference>
<dbReference type="GO" id="GO:0002250">
    <property type="term" value="P:adaptive immune response"/>
    <property type="evidence" value="ECO:0007669"/>
    <property type="project" value="UniProtKB-KW"/>
</dbReference>
<dbReference type="GO" id="GO:0070588">
    <property type="term" value="P:calcium ion transmembrane transport"/>
    <property type="evidence" value="ECO:0000304"/>
    <property type="project" value="Reactome"/>
</dbReference>
<dbReference type="GO" id="GO:0019722">
    <property type="term" value="P:calcium-mediated signaling"/>
    <property type="evidence" value="ECO:0000314"/>
    <property type="project" value="BHF-UCL"/>
</dbReference>
<dbReference type="GO" id="GO:0071318">
    <property type="term" value="P:cellular response to ATP"/>
    <property type="evidence" value="ECO:0007669"/>
    <property type="project" value="Ensembl"/>
</dbReference>
<dbReference type="GO" id="GO:0002407">
    <property type="term" value="P:dendritic cell chemotaxis"/>
    <property type="evidence" value="ECO:0000250"/>
    <property type="project" value="UniProtKB"/>
</dbReference>
<dbReference type="GO" id="GO:0098662">
    <property type="term" value="P:inorganic cation transmembrane transport"/>
    <property type="evidence" value="ECO:0000314"/>
    <property type="project" value="UniProtKB"/>
</dbReference>
<dbReference type="GO" id="GO:0086045">
    <property type="term" value="P:membrane depolarization during AV node cell action potential"/>
    <property type="evidence" value="ECO:0000315"/>
    <property type="project" value="BHF-UCL"/>
</dbReference>
<dbReference type="GO" id="GO:0086048">
    <property type="term" value="P:membrane depolarization during bundle of His cell action potential"/>
    <property type="evidence" value="ECO:0000315"/>
    <property type="project" value="BHF-UCL"/>
</dbReference>
<dbReference type="GO" id="GO:0086047">
    <property type="term" value="P:membrane depolarization during Purkinje myocyte cell action potential"/>
    <property type="evidence" value="ECO:0000315"/>
    <property type="project" value="BHF-UCL"/>
</dbReference>
<dbReference type="GO" id="GO:0030001">
    <property type="term" value="P:metal ion transport"/>
    <property type="evidence" value="ECO:0000318"/>
    <property type="project" value="GO_Central"/>
</dbReference>
<dbReference type="GO" id="GO:0098655">
    <property type="term" value="P:monoatomic cation transmembrane transport"/>
    <property type="evidence" value="ECO:0000318"/>
    <property type="project" value="GO_Central"/>
</dbReference>
<dbReference type="GO" id="GO:0030502">
    <property type="term" value="P:negative regulation of bone mineralization"/>
    <property type="evidence" value="ECO:0000250"/>
    <property type="project" value="BHF-UCL"/>
</dbReference>
<dbReference type="GO" id="GO:0045668">
    <property type="term" value="P:negative regulation of osteoblast differentiation"/>
    <property type="evidence" value="ECO:0000250"/>
    <property type="project" value="BHF-UCL"/>
</dbReference>
<dbReference type="GO" id="GO:1904179">
    <property type="term" value="P:positive regulation of adipose tissue development"/>
    <property type="evidence" value="ECO:0000250"/>
    <property type="project" value="BHF-UCL"/>
</dbReference>
<dbReference type="GO" id="GO:1903949">
    <property type="term" value="P:positive regulation of atrial cardiac muscle cell action potential"/>
    <property type="evidence" value="ECO:0000250"/>
    <property type="project" value="BHF-UCL"/>
</dbReference>
<dbReference type="GO" id="GO:0090263">
    <property type="term" value="P:positive regulation of canonical Wnt signaling pathway"/>
    <property type="evidence" value="ECO:0000314"/>
    <property type="project" value="UniProtKB"/>
</dbReference>
<dbReference type="GO" id="GO:0008284">
    <property type="term" value="P:positive regulation of cell population proliferation"/>
    <property type="evidence" value="ECO:0000314"/>
    <property type="project" value="UniProtKB"/>
</dbReference>
<dbReference type="GO" id="GO:0007204">
    <property type="term" value="P:positive regulation of cytosolic calcium ion concentration"/>
    <property type="evidence" value="ECO:0000250"/>
    <property type="project" value="BHF-UCL"/>
</dbReference>
<dbReference type="GO" id="GO:0045600">
    <property type="term" value="P:positive regulation of fat cell differentiation"/>
    <property type="evidence" value="ECO:0000250"/>
    <property type="project" value="BHF-UCL"/>
</dbReference>
<dbReference type="GO" id="GO:0010460">
    <property type="term" value="P:positive regulation of heart rate"/>
    <property type="evidence" value="ECO:0000250"/>
    <property type="project" value="BHF-UCL"/>
</dbReference>
<dbReference type="GO" id="GO:0035774">
    <property type="term" value="P:positive regulation of insulin secretion involved in cellular response to glucose stimulus"/>
    <property type="evidence" value="ECO:0000250"/>
    <property type="project" value="BHF-UCL"/>
</dbReference>
<dbReference type="GO" id="GO:1904199">
    <property type="term" value="P:positive regulation of regulation of vascular associated smooth muscle cell membrane depolarization"/>
    <property type="evidence" value="ECO:0000250"/>
    <property type="project" value="BHF-UCL"/>
</dbReference>
<dbReference type="GO" id="GO:0045907">
    <property type="term" value="P:positive regulation of vasoconstriction"/>
    <property type="evidence" value="ECO:0000250"/>
    <property type="project" value="BHF-UCL"/>
</dbReference>
<dbReference type="GO" id="GO:0051289">
    <property type="term" value="P:protein homotetramerization"/>
    <property type="evidence" value="ECO:0000314"/>
    <property type="project" value="UniProtKB"/>
</dbReference>
<dbReference type="GO" id="GO:0016925">
    <property type="term" value="P:protein sumoylation"/>
    <property type="evidence" value="ECO:0000314"/>
    <property type="project" value="UniProtKB"/>
</dbReference>
<dbReference type="GO" id="GO:0086091">
    <property type="term" value="P:regulation of heart rate by cardiac conduction"/>
    <property type="evidence" value="ECO:0000315"/>
    <property type="project" value="BHF-UCL"/>
</dbReference>
<dbReference type="GO" id="GO:0002724">
    <property type="term" value="P:regulation of T cell cytokine production"/>
    <property type="evidence" value="ECO:0000314"/>
    <property type="project" value="UniProtKB"/>
</dbReference>
<dbReference type="GO" id="GO:0098911">
    <property type="term" value="P:regulation of ventricular cardiac muscle cell action potential"/>
    <property type="evidence" value="ECO:0000315"/>
    <property type="project" value="BHF-UCL"/>
</dbReference>
<dbReference type="GO" id="GO:0098719">
    <property type="term" value="P:sodium ion import across plasma membrane"/>
    <property type="evidence" value="ECO:0000314"/>
    <property type="project" value="BHF-UCL"/>
</dbReference>
<dbReference type="InterPro" id="IPR005821">
    <property type="entry name" value="Ion_trans_dom"/>
</dbReference>
<dbReference type="InterPro" id="IPR050927">
    <property type="entry name" value="TRPM"/>
</dbReference>
<dbReference type="InterPro" id="IPR041491">
    <property type="entry name" value="TRPM_SLOG"/>
</dbReference>
<dbReference type="PANTHER" id="PTHR13800:SF6">
    <property type="entry name" value="TRANSIENT RECEPTOR POTENTIAL CATION CHANNEL SUBFAMILY M MEMBER 4"/>
    <property type="match status" value="1"/>
</dbReference>
<dbReference type="PANTHER" id="PTHR13800">
    <property type="entry name" value="TRANSIENT RECEPTOR POTENTIAL CATION CHANNEL, SUBFAMILY M, MEMBER 6"/>
    <property type="match status" value="1"/>
</dbReference>
<dbReference type="Pfam" id="PF00520">
    <property type="entry name" value="Ion_trans"/>
    <property type="match status" value="1"/>
</dbReference>
<dbReference type="Pfam" id="PF18139">
    <property type="entry name" value="LSDAT_euk"/>
    <property type="match status" value="1"/>
</dbReference>
<dbReference type="Pfam" id="PF25508">
    <property type="entry name" value="TRPM2"/>
    <property type="match status" value="1"/>
</dbReference>
<dbReference type="SUPFAM" id="SSF140860">
    <property type="entry name" value="Pseudo ankyrin repeat-like"/>
    <property type="match status" value="1"/>
</dbReference>
<comment type="function">
    <text evidence="3 4 5 6 7 8 9 10 11 12 13 14 15 16 18 22 23 25 27">Calcium-activated selective cation channel that mediates membrane depolarization (PubMed:12015988, PubMed:12842017, PubMed:29211723, PubMed:30528822). While it is activated by increase in intracellular Ca(2+), it is impermeable to it (PubMed:12015988). Mediates transport of monovalent cations (Na(+) &gt; K(+) &gt; Cs(+) &gt; Li(+)), leading to depolarize the membrane (PubMed:12015988). It thereby plays a central role in cadiomyocytes, neurons from entorhinal cortex, dorsal root and vomeronasal neurons, endocrine pancreas cells, kidney epithelial cells, cochlea hair cells etc. Participates in T-cell activation by modulating Ca(2+) oscillations after T lymphocyte activation, which is required for NFAT-dependent IL2 production. Involved in myogenic constriction of cerebral arteries. Controls insulin secretion in pancreatic beta-cells. May also be involved in pacemaking or could cause irregular electrical activity under conditions of Ca(2+) overload. Affects T-helper 1 (Th1) and T-helper 2 (Th2) cell motility and cytokine production through differential regulation of calcium signaling and NFATC1 localization. Enhances cell proliferation through up-regulation of the beta-catenin signaling pathway. Plays a role in keratinocyte differentiation (PubMed:30528822).</text>
</comment>
<comment type="function">
    <molecule>Isoform 2</molecule>
    <text evidence="6">Lacks channel activity.</text>
</comment>
<comment type="catalytic activity">
    <reaction evidence="4">
        <text>Na(+)(in) = Na(+)(out)</text>
        <dbReference type="Rhea" id="RHEA:34963"/>
        <dbReference type="ChEBI" id="CHEBI:29101"/>
    </reaction>
</comment>
<comment type="catalytic activity">
    <reaction evidence="4">
        <text>K(+)(in) = K(+)(out)</text>
        <dbReference type="Rhea" id="RHEA:29463"/>
        <dbReference type="ChEBI" id="CHEBI:29103"/>
    </reaction>
</comment>
<comment type="activity regulation">
    <text evidence="7 9 12 14 15 16 25 28">Displays weak voltage dependence, and repressed by decavanadate (PubMed:12799367, PubMed:15331675, PubMed:29211723, PubMed:38750366). Calmodulin-binding confers the Ca(2+) sensitivity (PubMed:15590641). ATP is able to restore Ca(2+) sensitivity after desensitization (PubMed:15590641). ATP inhibits channel activity (PubMed:14758478, PubMed:15331675, PubMed:29211723, PubMed:38750366). Phosphatidylinositol 4,5-bisphosphate (PIP2)-binding strongly enhances activity, by increasing the channel's Ca(2+) sensitivity and shifting its voltage dependence of activation towards negative potentials (PubMed:16186107, PubMed:16424899). Activity is also enhanced by 3,5-bis(trifluoromethyl)pyrazole derivative (BTP2) (PubMed:16407466). Exhibits pronounced temperature sensitivity, with activities strongly intensifying near physiological temperatures (PubMed:38750366).</text>
</comment>
<comment type="biophysicochemical properties">
    <temperatureDependence>
        <text evidence="28">Optimum temperature is 37.0 degrees Celsius.</text>
    </temperatureDependence>
</comment>
<comment type="subunit">
    <text evidence="25 26 33">Homotetramer.</text>
</comment>
<comment type="interaction">
    <interactant intactId="EBI-11723041">
        <id>Q8TD43</id>
    </interactant>
    <interactant intactId="EBI-717048">
        <id>P60903</id>
        <label>S100A10</label>
    </interactant>
    <organismsDiffer>false</organismsDiffer>
    <experiments>2</experiments>
</comment>
<comment type="interaction">
    <interactant intactId="EBI-11723041">
        <id>Q8TD43</id>
    </interactant>
    <interactant intactId="EBI-701862">
        <id>P31949</id>
        <label>S100A11</label>
    </interactant>
    <organismsDiffer>false</organismsDiffer>
    <experiments>2</experiments>
</comment>
<comment type="interaction">
    <interactant intactId="EBI-11723041">
        <id>Q8TD43</id>
    </interactant>
    <interactant intactId="EBI-752230">
        <id>P29034</id>
        <label>S100A2</label>
    </interactant>
    <organismsDiffer>false</organismsDiffer>
    <experiments>2</experiments>
</comment>
<comment type="interaction">
    <interactant intactId="EBI-11723041">
        <id>Q8TD43</id>
    </interactant>
    <interactant intactId="EBI-1044747">
        <id>P33764</id>
        <label>S100A3</label>
    </interactant>
    <organismsDiffer>false</organismsDiffer>
    <experiments>2</experiments>
</comment>
<comment type="interaction">
    <interactant intactId="EBI-11723041">
        <id>Q8TD43</id>
    </interactant>
    <interactant intactId="EBI-717058">
        <id>P26447</id>
        <label>S100A4</label>
    </interactant>
    <organismsDiffer>false</organismsDiffer>
    <experiments>2</experiments>
</comment>
<comment type="interaction">
    <interactant intactId="EBI-11723041">
        <id>Q8TD43</id>
    </interactant>
    <interactant intactId="EBI-7211732">
        <id>P33763</id>
        <label>S100A5</label>
    </interactant>
    <organismsDiffer>false</organismsDiffer>
    <experiments>3</experiments>
</comment>
<comment type="interaction">
    <interactant intactId="EBI-11723041">
        <id>Q8TD43</id>
    </interactant>
    <interactant intactId="EBI-352877">
        <id>P06703</id>
        <label>S100A6</label>
    </interactant>
    <organismsDiffer>false</organismsDiffer>
    <experiments>2</experiments>
</comment>
<comment type="interaction">
    <interactant intactId="EBI-11723041">
        <id>Q8TD43</id>
    </interactant>
    <interactant intactId="EBI-355281">
        <id>P05109</id>
        <label>S100A8</label>
    </interactant>
    <organismsDiffer>false</organismsDiffer>
    <experiments>2</experiments>
</comment>
<comment type="interaction">
    <interactant intactId="EBI-20594601">
        <id>Q8TD43-1</id>
    </interactant>
    <interactant intactId="EBI-20594601">
        <id>Q8TD43-1</id>
        <label>TRPM4</label>
    </interactant>
    <organismsDiffer>false</organismsDiffer>
    <experiments>2</experiments>
</comment>
<comment type="subcellular location">
    <molecule>Isoform 1</molecule>
    <subcellularLocation>
        <location evidence="4 9 12 20 25">Cell membrane</location>
        <topology evidence="25 26">Multi-pass membrane protein</topology>
    </subcellularLocation>
    <subcellularLocation>
        <location evidence="20">Endoplasmic reticulum</location>
    </subcellularLocation>
    <subcellularLocation>
        <location evidence="20">Golgi apparatus</location>
    </subcellularLocation>
</comment>
<comment type="subcellular location">
    <molecule>Isoform 2</molecule>
    <subcellularLocation>
        <location evidence="3">Cell membrane</location>
    </subcellularLocation>
    <subcellularLocation>
        <location>Endoplasmic reticulum</location>
    </subcellularLocation>
    <subcellularLocation>
        <location>Golgi apparatus</location>
    </subcellularLocation>
</comment>
<comment type="alternative products">
    <event type="alternative splicing"/>
    <isoform>
        <id>Q8TD43-1</id>
        <name>1</name>
        <name evidence="30">TRPM4b</name>
        <sequence type="displayed"/>
    </isoform>
    <isoform>
        <id>Q8TD43-2</id>
        <name>2</name>
        <name evidence="30 31">TRPM4a</name>
        <sequence type="described" ref="VSP_021442"/>
    </isoform>
    <isoform>
        <id>Q8TD43-3</id>
        <name>3</name>
        <name evidence="31">TRPM4c</name>
        <sequence type="described" ref="VSP_021443"/>
    </isoform>
</comment>
<comment type="tissue specificity">
    <text evidence="3 4 5 10 17 19 23 27">Widely expressed with a high expression in intestine and prostate. In brain, it is both expressed in whole cerebral arteries and isolated vascular smooth muscle cells. Prominently expressed in Purkinje fibers. Expressed at higher levels in T-helper 2 (Th2) cells as compared to T-helper 1 (Th1) cells. Expressed in keratocytes (PubMed:30528822).</text>
</comment>
<comment type="domain">
    <text evidence="25 26 28">TRPM4, is a temperature-sensitive ion channel, it adopts distinct conformations at different temperatures, markedly influencing where and how ligands interact with it. Decavanadate (a positive modulator), ATP (an inhibitor) and Ca(2+) bind to different locations of TRPM4 at physiological temperatures or at lower temperatures.</text>
</comment>
<comment type="PTM">
    <text evidence="12">Phosphorylation by PKC leads to increase the sensitivity to Ca(2+).</text>
</comment>
<comment type="PTM">
    <text evidence="19">Sumoylated. Desumoylated by SENP1.</text>
</comment>
<comment type="disease" evidence="19 21 24">
    <disease id="DI-02825">
        <name>Progressive familial heart block 1B</name>
        <acronym>PFHB1B</acronym>
        <description>A cardiac bundle branch disorder characterized by progressive alteration of cardiac conduction through the His-Purkinje system, with a pattern of a right bundle-branch block and/or left anterior hemiblock occurring individually or together. It leads to complete atrio-ventricular block causing syncope and sudden death.</description>
        <dbReference type="MIM" id="604559"/>
    </disease>
    <text>The disease is caused by variants affecting the gene represented in this entry.</text>
</comment>
<comment type="disease" evidence="27">
    <disease id="DI-05634">
        <name>Erythrokeratodermia variabilis et progressiva 6</name>
        <acronym>EKVP6</acronym>
        <description>A form of erythrokeratodermia variabilis et progressiva, a genodermatosis characterized by the coexistence of two independent skin lesions: transient erythema and hyperkeratosis that is usually localized but occasionally occurs in its generalized form. Clinical presentation varies significantly within a family and from one family to another. Palmoplantar keratoderma is present in around 50% of cases. EKVP6 inheritance is autosomal dominant.</description>
        <dbReference type="MIM" id="618531"/>
    </disease>
    <text>The disease is caused by variants affecting the gene represented in this entry.</text>
</comment>
<comment type="similarity">
    <text evidence="32">Belongs to the transient receptor (TC 1.A.4) family. LTrpC subfamily. TRPM4 sub-subfamily.</text>
</comment>
<comment type="sequence caution" evidence="32">
    <conflict type="erroneous termination">
        <sequence resource="EMBL-CDS" id="BAA90907"/>
    </conflict>
    <text>Truncated C-terminus.</text>
</comment>
<accession>Q8TD43</accession>
<accession>A2RU25</accession>
<accession>Q7Z5D9</accession>
<accession>Q96L84</accession>
<accession>Q9NXV1</accession>
<proteinExistence type="evidence at protein level"/>
<keyword id="KW-0002">3D-structure</keyword>
<keyword id="KW-1064">Adaptive immunity</keyword>
<keyword id="KW-0025">Alternative splicing</keyword>
<keyword id="KW-0067">ATP-binding</keyword>
<keyword id="KW-0106">Calcium</keyword>
<keyword id="KW-0112">Calmodulin-binding</keyword>
<keyword id="KW-1003">Cell membrane</keyword>
<keyword id="KW-0175">Coiled coil</keyword>
<keyword id="KW-0225">Disease variant</keyword>
<keyword id="KW-1015">Disulfide bond</keyword>
<keyword id="KW-0256">Endoplasmic reticulum</keyword>
<keyword id="KW-0325">Glycoprotein</keyword>
<keyword id="KW-0333">Golgi apparatus</keyword>
<keyword id="KW-0391">Immunity</keyword>
<keyword id="KW-0407">Ion channel</keyword>
<keyword id="KW-0406">Ion transport</keyword>
<keyword id="KW-0472">Membrane</keyword>
<keyword id="KW-0479">Metal-binding</keyword>
<keyword id="KW-0547">Nucleotide-binding</keyword>
<keyword id="KW-1007">Palmoplantar keratoderma</keyword>
<keyword id="KW-0597">Phosphoprotein</keyword>
<keyword id="KW-1267">Proteomics identification</keyword>
<keyword id="KW-1185">Reference proteome</keyword>
<keyword id="KW-0812">Transmembrane</keyword>
<keyword id="KW-1133">Transmembrane helix</keyword>
<keyword id="KW-0813">Transport</keyword>
<keyword id="KW-0832">Ubl conjugation</keyword>
<sequence>MVVPEKEQSWIPKIFKKKTCTTFIVDSTDPGGTLCQCGRPRTAHPAVAMEDAFGAAVVTVWDSDAHTTEKPTDAYGELDFTGAGRKHSNFLRLSDRTDPAAVYSLVTRTWGFRAPNLVVSVLGGSGGPVLQTWLQDLLRRGLVRAAQSTGAWIVTGGLHTGIGRHVGVAVRDHQMASTGGTKVVAMGVAPWGVVRNRDTLINPKGSFPARYRWRGDPEDGVQFPLDYNYSAFFLVDDGTHGCLGGENRFRLRLESYISQQKTGVGGTGIDIPVLLLLIDGDEKMLTRIENATQAQLPCLLVAGSGGAADCLAETLEDTLAPGSGGARQGEARDRIRRFFPKGDLEVLQAQVERIMTRKELLTVYSSEDGSEEFETIVLKALVKACGSSEASAYLDELRLAVAWNRVDIAQSELFRGDIQWRSFHLEASLMDALLNDRPEFVRLLISHGLSLGHFLTPMRLAQLYSAAPSNSLIRNLLDQASHSAGTKAPALKGGAAELRPPDVGHVLRMLLGKMCAPRYPSGGAWDPHPGQGFGESMYLLSDKATSPLSLDAGLGQAPWSDLLLWALLLNRAQMAMYFWEMGSNAVSSALGACLLLRVMARLEPDAEEAARRKDLAFKFEGMGVDLFGECYRSSEVRAARLLLRRCPLWGDATCLQLAMQADARAFFAQDGVQSLLTQKWWGDMASTTPIWALVLAFFCPPLIYTRLITFRKSEEEPTREELEFDMDSVINGEGPVGTADPAEKTPLGVPRQSGRPGCCGGRCGGRRCLRRWFHFWGAPVTIFMGNVVSYLLFLLLFSRVLLVDFQPAPPGSLELLLYFWAFTLLCEELRQGLSGGGGSLASGGPGPGHASLSQRLRLYLADSWNQCDLVALTCFLLGVGCRLTPGLYHLGRTVLCIDFMVFTVRLLHIFTVNKQLGPKIVIVSKMMKDVFFFLFFLGVWLVAYGVATEGLLRPRDSDFPSILRRVFYRPYLQIFGQIPQEDMDVALMEHSNCSSEPGFWAHPPGAQAGTCVSQYANWLVVLLLVIFLLVANILLVNLLIAMFSYTFGKVQGNSDLYWKAQRYRLIREFHSRPALAPPFIVISHLRLLLRQLCRRPRSPQPSSPALEHFRVYLSKEAERKLLTWESVHKENFLLARARDKRESDSERLKRTSQKVDLALKQLGHIREYEQRLKVLEREVQQCSRVLGWVAEALSRSALLPPGGPPPPDLPGSKD</sequence>
<organism>
    <name type="scientific">Homo sapiens</name>
    <name type="common">Human</name>
    <dbReference type="NCBI Taxonomy" id="9606"/>
    <lineage>
        <taxon>Eukaryota</taxon>
        <taxon>Metazoa</taxon>
        <taxon>Chordata</taxon>
        <taxon>Craniata</taxon>
        <taxon>Vertebrata</taxon>
        <taxon>Euteleostomi</taxon>
        <taxon>Mammalia</taxon>
        <taxon>Eutheria</taxon>
        <taxon>Euarchontoglires</taxon>
        <taxon>Primates</taxon>
        <taxon>Haplorrhini</taxon>
        <taxon>Catarrhini</taxon>
        <taxon>Hominidae</taxon>
        <taxon>Homo</taxon>
    </lineage>
</organism>
<gene>
    <name evidence="37" type="primary">TRPM4</name>
    <name type="synonym">LTRPC4</name>
</gene>